<gene>
    <name evidence="38" type="primary">XBP1</name>
    <name evidence="33" type="synonym">TREB5</name>
    <name evidence="38" type="synonym">XBP2</name>
</gene>
<proteinExistence type="evidence at protein level"/>
<organism>
    <name type="scientific">Homo sapiens</name>
    <name type="common">Human</name>
    <dbReference type="NCBI Taxonomy" id="9606"/>
    <lineage>
        <taxon>Eukaryota</taxon>
        <taxon>Metazoa</taxon>
        <taxon>Chordata</taxon>
        <taxon>Craniata</taxon>
        <taxon>Vertebrata</taxon>
        <taxon>Euteleostomi</taxon>
        <taxon>Mammalia</taxon>
        <taxon>Eutheria</taxon>
        <taxon>Euarchontoglires</taxon>
        <taxon>Primates</taxon>
        <taxon>Haplorrhini</taxon>
        <taxon>Catarrhini</taxon>
        <taxon>Hominidae</taxon>
        <taxon>Homo</taxon>
    </lineage>
</organism>
<name>XBP1_HUMAN</name>
<protein>
    <recommendedName>
        <fullName evidence="34 38">X-box-binding protein 1</fullName>
        <shortName evidence="34">XBP-1</shortName>
    </recommendedName>
    <alternativeName>
        <fullName evidence="33">Tax-responsive element-binding protein 5</fullName>
        <shortName evidence="33">TREB-5</shortName>
    </alternativeName>
    <component>
        <recommendedName>
            <fullName evidence="35">X-box-binding protein 1, cytoplasmic form</fullName>
        </recommendedName>
    </component>
    <component>
        <recommendedName>
            <fullName evidence="35">X-box-binding protein 1, luminal form</fullName>
        </recommendedName>
    </component>
</protein>
<dbReference type="EMBL" id="M31627">
    <property type="protein sequence ID" value="AAA36031.1"/>
    <property type="molecule type" value="mRNA"/>
</dbReference>
<dbReference type="EMBL" id="X55543">
    <property type="protein sequence ID" value="CAA39149.1"/>
    <property type="molecule type" value="Genomic_DNA"/>
</dbReference>
<dbReference type="EMBL" id="L13850">
    <property type="status" value="NOT_ANNOTATED_CDS"/>
    <property type="molecule type" value="Genomic_DNA"/>
</dbReference>
<dbReference type="EMBL" id="AB076383">
    <property type="protein sequence ID" value="BAB82981.1"/>
    <property type="molecule type" value="mRNA"/>
</dbReference>
<dbReference type="EMBL" id="AB076384">
    <property type="protein sequence ID" value="BAB82982.1"/>
    <property type="molecule type" value="mRNA"/>
</dbReference>
<dbReference type="EMBL" id="CR456611">
    <property type="protein sequence ID" value="CAG30497.1"/>
    <property type="molecule type" value="mRNA"/>
</dbReference>
<dbReference type="EMBL" id="Z93930">
    <property type="status" value="NOT_ANNOTATED_CDS"/>
    <property type="molecule type" value="Genomic_DNA"/>
</dbReference>
<dbReference type="EMBL" id="BC000938">
    <property type="protein sequence ID" value="AAH00938.1"/>
    <property type="molecule type" value="mRNA"/>
</dbReference>
<dbReference type="EMBL" id="BC012841">
    <property type="protein sequence ID" value="AAH12841.1"/>
    <property type="molecule type" value="mRNA"/>
</dbReference>
<dbReference type="EMBL" id="BC015709">
    <property type="protein sequence ID" value="AAH15709.1"/>
    <property type="molecule type" value="mRNA"/>
</dbReference>
<dbReference type="CCDS" id="CCDS13847.1">
    <molecule id="P17861-1"/>
</dbReference>
<dbReference type="PIR" id="A36299">
    <property type="entry name" value="A36299"/>
</dbReference>
<dbReference type="RefSeq" id="NP_001073007.1">
    <molecule id="P17861-2"/>
    <property type="nucleotide sequence ID" value="NM_001079539.2"/>
</dbReference>
<dbReference type="RefSeq" id="NP_005071.2">
    <molecule id="P17861-1"/>
    <property type="nucleotide sequence ID" value="NM_005080.3"/>
</dbReference>
<dbReference type="PDB" id="6R5Q">
    <property type="method" value="EM"/>
    <property type="resolution" value="3.00 A"/>
    <property type="chains" value="1=237-260"/>
</dbReference>
<dbReference type="PDB" id="6R6G">
    <property type="method" value="EM"/>
    <property type="resolution" value="3.70 A"/>
    <property type="chains" value="1=237-260"/>
</dbReference>
<dbReference type="PDB" id="6R6P">
    <property type="method" value="EM"/>
    <property type="resolution" value="3.10 A"/>
    <property type="chains" value="1=237-260"/>
</dbReference>
<dbReference type="PDB" id="6R7Q">
    <property type="method" value="EM"/>
    <property type="resolution" value="3.90 A"/>
    <property type="chains" value="1=237-260"/>
</dbReference>
<dbReference type="PDBsum" id="6R5Q"/>
<dbReference type="PDBsum" id="6R6G"/>
<dbReference type="PDBsum" id="6R6P"/>
<dbReference type="PDBsum" id="6R7Q"/>
<dbReference type="EMDB" id="EMD-4729"/>
<dbReference type="EMDB" id="EMD-4735"/>
<dbReference type="EMDB" id="EMD-4737"/>
<dbReference type="EMDB" id="EMD-4745"/>
<dbReference type="SMR" id="P17861"/>
<dbReference type="BioGRID" id="113331">
    <property type="interactions" value="48"/>
</dbReference>
<dbReference type="ComplexPortal" id="CPX-6597">
    <property type="entry name" value="bZIP transcription factor complex, ATF6-XBP1"/>
</dbReference>
<dbReference type="ComplexPortal" id="CPX-6600">
    <property type="entry name" value="bZIP transcription factor complex, ATF6B-XBP1"/>
</dbReference>
<dbReference type="DIP" id="DIP-41692N"/>
<dbReference type="FunCoup" id="P17861">
    <property type="interactions" value="1014"/>
</dbReference>
<dbReference type="IntAct" id="P17861">
    <property type="interactions" value="30"/>
</dbReference>
<dbReference type="MINT" id="P17861"/>
<dbReference type="STRING" id="9606.ENSP00000216037"/>
<dbReference type="BindingDB" id="P17861"/>
<dbReference type="ChEMBL" id="CHEMBL1741176"/>
<dbReference type="iPTMnet" id="P17861"/>
<dbReference type="PhosphoSitePlus" id="P17861"/>
<dbReference type="SwissPalm" id="P17861"/>
<dbReference type="BioMuta" id="XBP1"/>
<dbReference type="DMDM" id="60416406"/>
<dbReference type="jPOST" id="P17861"/>
<dbReference type="MassIVE" id="P17861"/>
<dbReference type="PaxDb" id="9606-ENSP00000216037"/>
<dbReference type="PeptideAtlas" id="P17861"/>
<dbReference type="ProteomicsDB" id="53522">
    <molecule id="P17861-1"/>
</dbReference>
<dbReference type="ProteomicsDB" id="53523">
    <molecule id="P17861-2"/>
</dbReference>
<dbReference type="Antibodypedia" id="10221">
    <property type="antibodies" value="697 antibodies from 42 providers"/>
</dbReference>
<dbReference type="DNASU" id="7494"/>
<dbReference type="Ensembl" id="ENST00000216037.10">
    <molecule id="P17861-1"/>
    <property type="protein sequence ID" value="ENSP00000216037.6"/>
    <property type="gene ID" value="ENSG00000100219.17"/>
</dbReference>
<dbReference type="Ensembl" id="ENST00000344347.6">
    <molecule id="P17861-2"/>
    <property type="protein sequence ID" value="ENSP00000343155.5"/>
    <property type="gene ID" value="ENSG00000100219.17"/>
</dbReference>
<dbReference type="GeneID" id="7494"/>
<dbReference type="KEGG" id="hsa:7494"/>
<dbReference type="MANE-Select" id="ENST00000344347.6">
    <molecule id="P17861-2"/>
    <property type="protein sequence ID" value="ENSP00000343155.5"/>
    <property type="RefSeq nucleotide sequence ID" value="NM_001079539.2"/>
    <property type="RefSeq protein sequence ID" value="NP_001073007.1"/>
</dbReference>
<dbReference type="UCSC" id="uc062cvg.1">
    <molecule id="P17861-1"/>
    <property type="organism name" value="human"/>
</dbReference>
<dbReference type="AGR" id="HGNC:12801"/>
<dbReference type="CTD" id="7494"/>
<dbReference type="DisGeNET" id="7494"/>
<dbReference type="GeneCards" id="XBP1"/>
<dbReference type="HGNC" id="HGNC:12801">
    <property type="gene designation" value="XBP1"/>
</dbReference>
<dbReference type="HPA" id="ENSG00000100219">
    <property type="expression patterns" value="Tissue enhanced (pancreas)"/>
</dbReference>
<dbReference type="MalaCards" id="XBP1"/>
<dbReference type="MIM" id="194355">
    <property type="type" value="gene"/>
</dbReference>
<dbReference type="MIM" id="612371">
    <property type="type" value="phenotype"/>
</dbReference>
<dbReference type="neXtProt" id="NX_P17861"/>
<dbReference type="OpenTargets" id="ENSG00000100219"/>
<dbReference type="PharmGKB" id="PA37400"/>
<dbReference type="VEuPathDB" id="HostDB:ENSG00000100219"/>
<dbReference type="eggNOG" id="KOG4005">
    <property type="taxonomic scope" value="Eukaryota"/>
</dbReference>
<dbReference type="GeneTree" id="ENSGT00390000017751"/>
<dbReference type="HOGENOM" id="CLU_069050_0_0_1"/>
<dbReference type="InParanoid" id="P17861"/>
<dbReference type="OrthoDB" id="20960at2759"/>
<dbReference type="PAN-GO" id="P17861">
    <property type="GO annotations" value="4 GO annotations based on evolutionary models"/>
</dbReference>
<dbReference type="PhylomeDB" id="P17861"/>
<dbReference type="TreeFam" id="TF319837"/>
<dbReference type="PathwayCommons" id="P17861"/>
<dbReference type="Reactome" id="R-HSA-381038">
    <molecule id="P17861-2"/>
    <property type="pathway name" value="XBP1(S) activates chaperone genes"/>
</dbReference>
<dbReference type="Reactome" id="R-HSA-381070">
    <molecule id="P17861-2"/>
    <property type="pathway name" value="IRE1alpha activates chaperones"/>
</dbReference>
<dbReference type="Reactome" id="R-HSA-381183">
    <molecule id="P17861-2"/>
    <property type="pathway name" value="ATF6 (ATF6-alpha) activates chaperone genes"/>
</dbReference>
<dbReference type="SignaLink" id="P17861"/>
<dbReference type="SIGNOR" id="P17861"/>
<dbReference type="BioGRID-ORCS" id="7494">
    <property type="hits" value="16 hits in 1182 CRISPR screens"/>
</dbReference>
<dbReference type="ChiTaRS" id="XBP1">
    <property type="organism name" value="human"/>
</dbReference>
<dbReference type="GeneWiki" id="XBP1"/>
<dbReference type="GenomeRNAi" id="7494"/>
<dbReference type="Pharos" id="P17861">
    <property type="development level" value="Tchem"/>
</dbReference>
<dbReference type="PRO" id="PR:P17861"/>
<dbReference type="Proteomes" id="UP000005640">
    <property type="component" value="Chromosome 22"/>
</dbReference>
<dbReference type="RNAct" id="P17861">
    <property type="molecule type" value="protein"/>
</dbReference>
<dbReference type="Bgee" id="ENSG00000100219">
    <property type="expression patterns" value="Expressed in body of pancreas and 120 other cell types or tissues"/>
</dbReference>
<dbReference type="ExpressionAtlas" id="P17861">
    <property type="expression patterns" value="baseline and differential"/>
</dbReference>
<dbReference type="GO" id="GO:0005737">
    <property type="term" value="C:cytoplasm"/>
    <property type="evidence" value="ECO:0000314"/>
    <property type="project" value="UniProtKB"/>
</dbReference>
<dbReference type="GO" id="GO:0005829">
    <property type="term" value="C:cytosol"/>
    <property type="evidence" value="ECO:0000314"/>
    <property type="project" value="UniProtKB"/>
</dbReference>
<dbReference type="GO" id="GO:0005783">
    <property type="term" value="C:endoplasmic reticulum"/>
    <property type="evidence" value="ECO:0000314"/>
    <property type="project" value="UniProtKB"/>
</dbReference>
<dbReference type="GO" id="GO:0005789">
    <property type="term" value="C:endoplasmic reticulum membrane"/>
    <property type="evidence" value="ECO:0000314"/>
    <property type="project" value="UniProtKB"/>
</dbReference>
<dbReference type="GO" id="GO:0005654">
    <property type="term" value="C:nucleoplasm"/>
    <property type="evidence" value="ECO:0000304"/>
    <property type="project" value="Reactome"/>
</dbReference>
<dbReference type="GO" id="GO:0005634">
    <property type="term" value="C:nucleus"/>
    <property type="evidence" value="ECO:0000314"/>
    <property type="project" value="LIFEdb"/>
</dbReference>
<dbReference type="GO" id="GO:0090575">
    <property type="term" value="C:RNA polymerase II transcription regulator complex"/>
    <property type="evidence" value="ECO:0000353"/>
    <property type="project" value="ComplexPortal"/>
</dbReference>
<dbReference type="GO" id="GO:0031490">
    <property type="term" value="F:chromatin DNA binding"/>
    <property type="evidence" value="ECO:0000314"/>
    <property type="project" value="UniProtKB"/>
</dbReference>
<dbReference type="GO" id="GO:0000987">
    <property type="term" value="F:cis-regulatory region sequence-specific DNA binding"/>
    <property type="evidence" value="ECO:0000314"/>
    <property type="project" value="UniProtKB"/>
</dbReference>
<dbReference type="GO" id="GO:0003677">
    <property type="term" value="F:DNA binding"/>
    <property type="evidence" value="ECO:0000304"/>
    <property type="project" value="ProtInc"/>
</dbReference>
<dbReference type="GO" id="GO:0003700">
    <property type="term" value="F:DNA-binding transcription factor activity"/>
    <property type="evidence" value="ECO:0000314"/>
    <property type="project" value="UniProtKB"/>
</dbReference>
<dbReference type="GO" id="GO:0000981">
    <property type="term" value="F:DNA-binding transcription factor activity, RNA polymerase II-specific"/>
    <property type="evidence" value="ECO:0000318"/>
    <property type="project" value="GO_Central"/>
</dbReference>
<dbReference type="GO" id="GO:0042802">
    <property type="term" value="F:identical protein binding"/>
    <property type="evidence" value="ECO:0000353"/>
    <property type="project" value="IntAct"/>
</dbReference>
<dbReference type="GO" id="GO:0030331">
    <property type="term" value="F:nuclear estrogen receptor binding"/>
    <property type="evidence" value="ECO:0000304"/>
    <property type="project" value="ParkinsonsUK-UCL"/>
</dbReference>
<dbReference type="GO" id="GO:0002020">
    <property type="term" value="F:protease binding"/>
    <property type="evidence" value="ECO:0000353"/>
    <property type="project" value="UniProtKB"/>
</dbReference>
<dbReference type="GO" id="GO:0046982">
    <property type="term" value="F:protein heterodimerization activity"/>
    <property type="evidence" value="ECO:0000314"/>
    <property type="project" value="UniProtKB"/>
</dbReference>
<dbReference type="GO" id="GO:0019901">
    <property type="term" value="F:protein kinase binding"/>
    <property type="evidence" value="ECO:0000353"/>
    <property type="project" value="UniProtKB"/>
</dbReference>
<dbReference type="GO" id="GO:0000978">
    <property type="term" value="F:RNA polymerase II cis-regulatory region sequence-specific DNA binding"/>
    <property type="evidence" value="ECO:0000250"/>
    <property type="project" value="UniProtKB"/>
</dbReference>
<dbReference type="GO" id="GO:0000977">
    <property type="term" value="F:RNA polymerase II transcription regulatory region sequence-specific DNA binding"/>
    <property type="evidence" value="ECO:0000314"/>
    <property type="project" value="UniProtKB"/>
</dbReference>
<dbReference type="GO" id="GO:1990837">
    <property type="term" value="F:sequence-specific double-stranded DNA binding"/>
    <property type="evidence" value="ECO:0000314"/>
    <property type="project" value="ARUK-UCL"/>
</dbReference>
<dbReference type="GO" id="GO:0000976">
    <property type="term" value="F:transcription cis-regulatory region binding"/>
    <property type="evidence" value="ECO:0000314"/>
    <property type="project" value="UniProtKB"/>
</dbReference>
<dbReference type="GO" id="GO:0031625">
    <property type="term" value="F:ubiquitin protein ligase binding"/>
    <property type="evidence" value="ECO:0000353"/>
    <property type="project" value="UniProtKB"/>
</dbReference>
<dbReference type="GO" id="GO:0060612">
    <property type="term" value="P:adipose tissue development"/>
    <property type="evidence" value="ECO:0000250"/>
    <property type="project" value="UniProtKB"/>
</dbReference>
<dbReference type="GO" id="GO:0001525">
    <property type="term" value="P:angiogenesis"/>
    <property type="evidence" value="ECO:0000250"/>
    <property type="project" value="UniProtKB"/>
</dbReference>
<dbReference type="GO" id="GO:0036500">
    <property type="term" value="P:ATF6-mediated unfolded protein response"/>
    <property type="evidence" value="ECO:0000303"/>
    <property type="project" value="ComplexPortal"/>
</dbReference>
<dbReference type="GO" id="GO:0006914">
    <property type="term" value="P:autophagy"/>
    <property type="evidence" value="ECO:0007669"/>
    <property type="project" value="UniProtKB-KW"/>
</dbReference>
<dbReference type="GO" id="GO:0071230">
    <property type="term" value="P:cellular response to amino acid stimulus"/>
    <property type="evidence" value="ECO:0000250"/>
    <property type="project" value="UniProtKB"/>
</dbReference>
<dbReference type="GO" id="GO:0071498">
    <property type="term" value="P:cellular response to fluid shear stress"/>
    <property type="evidence" value="ECO:0000314"/>
    <property type="project" value="UniProtKB"/>
</dbReference>
<dbReference type="GO" id="GO:0071332">
    <property type="term" value="P:cellular response to fructose stimulus"/>
    <property type="evidence" value="ECO:0000250"/>
    <property type="project" value="UniProtKB"/>
</dbReference>
<dbReference type="GO" id="GO:0042149">
    <property type="term" value="P:cellular response to glucose starvation"/>
    <property type="evidence" value="ECO:0000250"/>
    <property type="project" value="UniProtKB"/>
</dbReference>
<dbReference type="GO" id="GO:0071333">
    <property type="term" value="P:cellular response to glucose stimulus"/>
    <property type="evidence" value="ECO:0000250"/>
    <property type="project" value="UniProtKB"/>
</dbReference>
<dbReference type="GO" id="GO:0032869">
    <property type="term" value="P:cellular response to insulin stimulus"/>
    <property type="evidence" value="ECO:0000250"/>
    <property type="project" value="UniProtKB"/>
</dbReference>
<dbReference type="GO" id="GO:0071353">
    <property type="term" value="P:cellular response to interleukin-4"/>
    <property type="evidence" value="ECO:0000250"/>
    <property type="project" value="UniProtKB"/>
</dbReference>
<dbReference type="GO" id="GO:0071499">
    <property type="term" value="P:cellular response to laminar fluid shear stress"/>
    <property type="evidence" value="ECO:0000314"/>
    <property type="project" value="UniProtKB"/>
</dbReference>
<dbReference type="GO" id="GO:1990830">
    <property type="term" value="P:cellular response to leukemia inhibitory factor"/>
    <property type="evidence" value="ECO:0007669"/>
    <property type="project" value="Ensembl"/>
</dbReference>
<dbReference type="GO" id="GO:0071222">
    <property type="term" value="P:cellular response to lipopolysaccharide"/>
    <property type="evidence" value="ECO:0000314"/>
    <property type="project" value="UniProtKB"/>
</dbReference>
<dbReference type="GO" id="GO:0031670">
    <property type="term" value="P:cellular response to nutrient"/>
    <property type="evidence" value="ECO:0000250"/>
    <property type="project" value="UniProtKB"/>
</dbReference>
<dbReference type="GO" id="GO:0034599">
    <property type="term" value="P:cellular response to oxidative stress"/>
    <property type="evidence" value="ECO:0000314"/>
    <property type="project" value="UniProtKB"/>
</dbReference>
<dbReference type="GO" id="GO:0071375">
    <property type="term" value="P:cellular response to peptide hormone stimulus"/>
    <property type="evidence" value="ECO:0000250"/>
    <property type="project" value="UniProtKB"/>
</dbReference>
<dbReference type="GO" id="GO:0035924">
    <property type="term" value="P:cellular response to vascular endothelial growth factor stimulus"/>
    <property type="evidence" value="ECO:0000314"/>
    <property type="project" value="UniProtKB"/>
</dbReference>
<dbReference type="GO" id="GO:0042632">
    <property type="term" value="P:cholesterol homeostasis"/>
    <property type="evidence" value="ECO:0000250"/>
    <property type="project" value="UniProtKB"/>
</dbReference>
<dbReference type="GO" id="GO:0030968">
    <property type="term" value="P:endoplasmic reticulum unfolded protein response"/>
    <property type="evidence" value="ECO:0000314"/>
    <property type="project" value="UniProtKB"/>
</dbReference>
<dbReference type="GO" id="GO:0001935">
    <property type="term" value="P:endothelial cell proliferation"/>
    <property type="evidence" value="ECO:0000314"/>
    <property type="project" value="UniProtKB"/>
</dbReference>
<dbReference type="GO" id="GO:0060691">
    <property type="term" value="P:epithelial cell maturation involved in salivary gland development"/>
    <property type="evidence" value="ECO:0007669"/>
    <property type="project" value="Ensembl"/>
</dbReference>
<dbReference type="GO" id="GO:0036503">
    <property type="term" value="P:ERAD pathway"/>
    <property type="evidence" value="ECO:0000303"/>
    <property type="project" value="ComplexPortal"/>
</dbReference>
<dbReference type="GO" id="GO:0031017">
    <property type="term" value="P:exocrine pancreas development"/>
    <property type="evidence" value="ECO:0007669"/>
    <property type="project" value="Ensembl"/>
</dbReference>
<dbReference type="GO" id="GO:0006633">
    <property type="term" value="P:fatty acid biosynthetic process"/>
    <property type="evidence" value="ECO:0000304"/>
    <property type="project" value="ParkinsonsUK-UCL"/>
</dbReference>
<dbReference type="GO" id="GO:0055089">
    <property type="term" value="P:fatty acid homeostasis"/>
    <property type="evidence" value="ECO:0000250"/>
    <property type="project" value="UniProtKB"/>
</dbReference>
<dbReference type="GO" id="GO:0002071">
    <property type="term" value="P:glandular epithelial cell maturation"/>
    <property type="evidence" value="ECO:0007669"/>
    <property type="project" value="Ensembl"/>
</dbReference>
<dbReference type="GO" id="GO:0006955">
    <property type="term" value="P:immune response"/>
    <property type="evidence" value="ECO:0000304"/>
    <property type="project" value="ParkinsonsUK-UCL"/>
</dbReference>
<dbReference type="GO" id="GO:0035356">
    <property type="term" value="P:intracellular triglyceride homeostasis"/>
    <property type="evidence" value="ECO:0000250"/>
    <property type="project" value="UniProtKB"/>
</dbReference>
<dbReference type="GO" id="GO:0070059">
    <property type="term" value="P:intrinsic apoptotic signaling pathway in response to endoplasmic reticulum stress"/>
    <property type="evidence" value="ECO:0007669"/>
    <property type="project" value="Ensembl"/>
</dbReference>
<dbReference type="GO" id="GO:0036498">
    <property type="term" value="P:IRE1-mediated unfolded protein response"/>
    <property type="evidence" value="ECO:0000304"/>
    <property type="project" value="ParkinsonsUK-UCL"/>
</dbReference>
<dbReference type="GO" id="GO:0001889">
    <property type="term" value="P:liver development"/>
    <property type="evidence" value="ECO:0000250"/>
    <property type="project" value="UniProtKB"/>
</dbReference>
<dbReference type="GO" id="GO:0007517">
    <property type="term" value="P:muscle organ development"/>
    <property type="evidence" value="ECO:0007669"/>
    <property type="project" value="UniProtKB-KW"/>
</dbReference>
<dbReference type="GO" id="GO:0043066">
    <property type="term" value="P:negative regulation of apoptotic process"/>
    <property type="evidence" value="ECO:0000250"/>
    <property type="project" value="UniProtKB"/>
</dbReference>
<dbReference type="GO" id="GO:1902236">
    <property type="term" value="P:negative regulation of endoplasmic reticulum stress-induced intrinsic apoptotic signaling pathway"/>
    <property type="evidence" value="ECO:0000314"/>
    <property type="project" value="ParkinsonsUK-UCL"/>
</dbReference>
<dbReference type="GO" id="GO:1900102">
    <property type="term" value="P:negative regulation of endoplasmic reticulum unfolded protein response"/>
    <property type="evidence" value="ECO:0000314"/>
    <property type="project" value="UniProtKB"/>
</dbReference>
<dbReference type="GO" id="GO:0070373">
    <property type="term" value="P:negative regulation of ERK1 and ERK2 cascade"/>
    <property type="evidence" value="ECO:0000314"/>
    <property type="project" value="BHF-UCL"/>
</dbReference>
<dbReference type="GO" id="GO:0010832">
    <property type="term" value="P:negative regulation of myotube differentiation"/>
    <property type="evidence" value="ECO:0000250"/>
    <property type="project" value="UniProtKB"/>
</dbReference>
<dbReference type="GO" id="GO:0060392">
    <property type="term" value="P:negative regulation of SMAD protein signal transduction"/>
    <property type="evidence" value="ECO:0000314"/>
    <property type="project" value="BHF-UCL"/>
</dbReference>
<dbReference type="GO" id="GO:0000122">
    <property type="term" value="P:negative regulation of transcription by RNA polymerase II"/>
    <property type="evidence" value="ECO:0000314"/>
    <property type="project" value="UniProtKB"/>
</dbReference>
<dbReference type="GO" id="GO:0030512">
    <property type="term" value="P:negative regulation of transforming growth factor beta receptor signaling pathway"/>
    <property type="evidence" value="ECO:0000314"/>
    <property type="project" value="BHF-UCL"/>
</dbReference>
<dbReference type="GO" id="GO:0048666">
    <property type="term" value="P:neuron development"/>
    <property type="evidence" value="ECO:0000250"/>
    <property type="project" value="UniProtKB"/>
</dbReference>
<dbReference type="GO" id="GO:0043491">
    <property type="term" value="P:phosphatidylinositol 3-kinase/protein kinase B signal transduction"/>
    <property type="evidence" value="ECO:0000314"/>
    <property type="project" value="UniProtKB"/>
</dbReference>
<dbReference type="GO" id="GO:0045766">
    <property type="term" value="P:positive regulation of angiogenesis"/>
    <property type="evidence" value="ECO:0000315"/>
    <property type="project" value="BHF-UCL"/>
</dbReference>
<dbReference type="GO" id="GO:0010508">
    <property type="term" value="P:positive regulation of autophagy"/>
    <property type="evidence" value="ECO:0000314"/>
    <property type="project" value="UniProtKB"/>
</dbReference>
<dbReference type="GO" id="GO:0045579">
    <property type="term" value="P:positive regulation of B cell differentiation"/>
    <property type="evidence" value="ECO:0000314"/>
    <property type="project" value="UniProtKB"/>
</dbReference>
<dbReference type="GO" id="GO:0030335">
    <property type="term" value="P:positive regulation of cell migration"/>
    <property type="evidence" value="ECO:0000314"/>
    <property type="project" value="BHF-UCL"/>
</dbReference>
<dbReference type="GO" id="GO:0008284">
    <property type="term" value="P:positive regulation of cell population proliferation"/>
    <property type="evidence" value="ECO:0000314"/>
    <property type="project" value="BHF-UCL"/>
</dbReference>
<dbReference type="GO" id="GO:2000353">
    <property type="term" value="P:positive regulation of endothelial cell apoptotic process"/>
    <property type="evidence" value="ECO:0000314"/>
    <property type="project" value="UniProtKB"/>
</dbReference>
<dbReference type="GO" id="GO:1904294">
    <property type="term" value="P:positive regulation of ERAD pathway"/>
    <property type="evidence" value="ECO:0000304"/>
    <property type="project" value="ParkinsonsUK-UCL"/>
</dbReference>
<dbReference type="GO" id="GO:0045600">
    <property type="term" value="P:positive regulation of fat cell differentiation"/>
    <property type="evidence" value="ECO:0000250"/>
    <property type="project" value="UniProtKB"/>
</dbReference>
<dbReference type="GO" id="GO:2000347">
    <property type="term" value="P:positive regulation of hepatocyte proliferation"/>
    <property type="evidence" value="ECO:0000250"/>
    <property type="project" value="UniProtKB"/>
</dbReference>
<dbReference type="GO" id="GO:0002639">
    <property type="term" value="P:positive regulation of immunoglobulin production"/>
    <property type="evidence" value="ECO:0000314"/>
    <property type="project" value="UniProtKB"/>
</dbReference>
<dbReference type="GO" id="GO:0032755">
    <property type="term" value="P:positive regulation of interleukin-6 production"/>
    <property type="evidence" value="ECO:0000250"/>
    <property type="project" value="UniProtKB"/>
</dbReference>
<dbReference type="GO" id="GO:1903489">
    <property type="term" value="P:positive regulation of lactation"/>
    <property type="evidence" value="ECO:0000250"/>
    <property type="project" value="UniProtKB"/>
</dbReference>
<dbReference type="GO" id="GO:0045348">
    <property type="term" value="P:positive regulation of MHC class II biosynthetic process"/>
    <property type="evidence" value="ECO:0000315"/>
    <property type="project" value="UniProtKB"/>
</dbReference>
<dbReference type="GO" id="GO:0051897">
    <property type="term" value="P:positive regulation of phosphatidylinositol 3-kinase/protein kinase B signal transduction"/>
    <property type="evidence" value="ECO:0000314"/>
    <property type="project" value="BHF-UCL"/>
</dbReference>
<dbReference type="GO" id="GO:0071073">
    <property type="term" value="P:positive regulation of phospholipid biosynthetic process"/>
    <property type="evidence" value="ECO:0000304"/>
    <property type="project" value="ParkinsonsUK-UCL"/>
</dbReference>
<dbReference type="GO" id="GO:1900100">
    <property type="term" value="P:positive regulation of plasma cell differentiation"/>
    <property type="evidence" value="ECO:0000314"/>
    <property type="project" value="UniProtKB"/>
</dbReference>
<dbReference type="GO" id="GO:1901985">
    <property type="term" value="P:positive regulation of protein acetylation"/>
    <property type="evidence" value="ECO:0000314"/>
    <property type="project" value="UniProtKB"/>
</dbReference>
<dbReference type="GO" id="GO:0042307">
    <property type="term" value="P:positive regulation of protein import into nucleus"/>
    <property type="evidence" value="ECO:0000314"/>
    <property type="project" value="UniProtKB"/>
</dbReference>
<dbReference type="GO" id="GO:0001934">
    <property type="term" value="P:positive regulation of protein phosphorylation"/>
    <property type="evidence" value="ECO:0000314"/>
    <property type="project" value="UniProtKB"/>
</dbReference>
<dbReference type="GO" id="GO:0045582">
    <property type="term" value="P:positive regulation of T cell differentiation"/>
    <property type="evidence" value="ECO:0000314"/>
    <property type="project" value="UniProtKB"/>
</dbReference>
<dbReference type="GO" id="GO:0032008">
    <property type="term" value="P:positive regulation of TOR signaling"/>
    <property type="evidence" value="ECO:0000315"/>
    <property type="project" value="UniProtKB"/>
</dbReference>
<dbReference type="GO" id="GO:0045944">
    <property type="term" value="P:positive regulation of transcription by RNA polymerase II"/>
    <property type="evidence" value="ECO:0000314"/>
    <property type="project" value="ParkinsonsUK-UCL"/>
</dbReference>
<dbReference type="GO" id="GO:1904754">
    <property type="term" value="P:positive regulation of vascular associated smooth muscle cell migration"/>
    <property type="evidence" value="ECO:0000314"/>
    <property type="project" value="BHF-UCL"/>
</dbReference>
<dbReference type="GO" id="GO:1904707">
    <property type="term" value="P:positive regulation of vascular associated smooth muscle cell proliferation"/>
    <property type="evidence" value="ECO:0000314"/>
    <property type="project" value="BHF-UCL"/>
</dbReference>
<dbReference type="GO" id="GO:0035470">
    <property type="term" value="P:positive regulation of vascular wound healing"/>
    <property type="evidence" value="ECO:0000314"/>
    <property type="project" value="BHF-UCL"/>
</dbReference>
<dbReference type="GO" id="GO:0031648">
    <property type="term" value="P:protein destabilization"/>
    <property type="evidence" value="ECO:0000314"/>
    <property type="project" value="UniProtKB"/>
</dbReference>
<dbReference type="GO" id="GO:0015031">
    <property type="term" value="P:protein transport"/>
    <property type="evidence" value="ECO:0007669"/>
    <property type="project" value="UniProtKB-KW"/>
</dbReference>
<dbReference type="GO" id="GO:0010506">
    <property type="term" value="P:regulation of autophagy"/>
    <property type="evidence" value="ECO:0007669"/>
    <property type="project" value="Ensembl"/>
</dbReference>
<dbReference type="GO" id="GO:0001558">
    <property type="term" value="P:regulation of cell growth"/>
    <property type="evidence" value="ECO:0000314"/>
    <property type="project" value="UniProtKB"/>
</dbReference>
<dbReference type="GO" id="GO:0031647">
    <property type="term" value="P:regulation of protein stability"/>
    <property type="evidence" value="ECO:0000314"/>
    <property type="project" value="UniProtKB"/>
</dbReference>
<dbReference type="GO" id="GO:0006357">
    <property type="term" value="P:regulation of transcription by RNA polymerase II"/>
    <property type="evidence" value="ECO:0000303"/>
    <property type="project" value="ComplexPortal"/>
</dbReference>
<dbReference type="GO" id="GO:0034976">
    <property type="term" value="P:response to endoplasmic reticulum stress"/>
    <property type="evidence" value="ECO:0000314"/>
    <property type="project" value="UniProtKB"/>
</dbReference>
<dbReference type="GO" id="GO:1990418">
    <property type="term" value="P:response to insulin-like growth factor stimulus"/>
    <property type="evidence" value="ECO:0000250"/>
    <property type="project" value="UniProtKB"/>
</dbReference>
<dbReference type="GO" id="GO:0055092">
    <property type="term" value="P:sterol homeostasis"/>
    <property type="evidence" value="ECO:0000250"/>
    <property type="project" value="UniProtKB"/>
</dbReference>
<dbReference type="GO" id="GO:0006366">
    <property type="term" value="P:transcription by RNA polymerase II"/>
    <property type="evidence" value="ECO:0000250"/>
    <property type="project" value="UniProtKB"/>
</dbReference>
<dbReference type="GO" id="GO:0006511">
    <property type="term" value="P:ubiquitin-dependent protein catabolic process"/>
    <property type="evidence" value="ECO:0000250"/>
    <property type="project" value="UniProtKB"/>
</dbReference>
<dbReference type="GO" id="GO:0048010">
    <property type="term" value="P:vascular endothelial growth factor receptor signaling pathway"/>
    <property type="evidence" value="ECO:0000314"/>
    <property type="project" value="UniProtKB"/>
</dbReference>
<dbReference type="CDD" id="cd14691">
    <property type="entry name" value="bZIP_XBP1"/>
    <property type="match status" value="1"/>
</dbReference>
<dbReference type="FunFam" id="1.20.5.170:FF:000049">
    <property type="entry name" value="X-box binding protein 1"/>
    <property type="match status" value="1"/>
</dbReference>
<dbReference type="Gene3D" id="1.20.5.170">
    <property type="match status" value="1"/>
</dbReference>
<dbReference type="InterPro" id="IPR004827">
    <property type="entry name" value="bZIP"/>
</dbReference>
<dbReference type="InterPro" id="IPR046347">
    <property type="entry name" value="bZIP_sf"/>
</dbReference>
<dbReference type="InterPro" id="IPR052470">
    <property type="entry name" value="ER_Stress-Reg_TF"/>
</dbReference>
<dbReference type="PANTHER" id="PTHR46542">
    <property type="entry name" value="X-BOX BINDING PROTEIN 1"/>
    <property type="match status" value="1"/>
</dbReference>
<dbReference type="PANTHER" id="PTHR46542:SF3">
    <property type="entry name" value="X-BOX-BINDING PROTEIN 1"/>
    <property type="match status" value="1"/>
</dbReference>
<dbReference type="Pfam" id="PF07716">
    <property type="entry name" value="bZIP_2"/>
    <property type="match status" value="1"/>
</dbReference>
<dbReference type="SMART" id="SM00338">
    <property type="entry name" value="BRLZ"/>
    <property type="match status" value="1"/>
</dbReference>
<dbReference type="SUPFAM" id="SSF57959">
    <property type="entry name" value="Leucine zipper domain"/>
    <property type="match status" value="1"/>
</dbReference>
<dbReference type="PROSITE" id="PS50217">
    <property type="entry name" value="BZIP"/>
    <property type="match status" value="1"/>
</dbReference>
<dbReference type="PROSITE" id="PS00036">
    <property type="entry name" value="BZIP_BASIC"/>
    <property type="match status" value="1"/>
</dbReference>
<sequence length="261" mass="28695">MVVVAAAPNPADGTPKVLLLSGQPASAAGAPAGQALPLMVPAQRGASPEAASGGLPQARKRQRLTHLSPEEKALRRKLKNRVAAQTARDRKKARMSELEQQVVDLEEENQKLLLENQLLREKTHGLVVENQELRQRLGMDALVAEEEAEAKGNEVRPVAGSAESAALRLRAPLQQVQAQLSPLQNISPWILAVLTLQIQSLISCWAFWTTWTQSCSSNALPQSLPAWRSSQRSTQKDPVPYQPPFLCQWGRHQPSWKPLMN</sequence>
<evidence type="ECO:0000250" key="1">
    <source>
        <dbReference type="UniProtKB" id="O35426"/>
    </source>
</evidence>
<evidence type="ECO:0000255" key="2"/>
<evidence type="ECO:0000255" key="3">
    <source>
        <dbReference type="PROSITE-ProRule" id="PRU00978"/>
    </source>
</evidence>
<evidence type="ECO:0000256" key="4">
    <source>
        <dbReference type="SAM" id="MobiDB-lite"/>
    </source>
</evidence>
<evidence type="ECO:0000269" key="5">
    <source>
    </source>
</evidence>
<evidence type="ECO:0000269" key="6">
    <source>
    </source>
</evidence>
<evidence type="ECO:0000269" key="7">
    <source>
    </source>
</evidence>
<evidence type="ECO:0000269" key="8">
    <source>
    </source>
</evidence>
<evidence type="ECO:0000269" key="9">
    <source>
    </source>
</evidence>
<evidence type="ECO:0000269" key="10">
    <source>
    </source>
</evidence>
<evidence type="ECO:0000269" key="11">
    <source>
    </source>
</evidence>
<evidence type="ECO:0000269" key="12">
    <source>
    </source>
</evidence>
<evidence type="ECO:0000269" key="13">
    <source>
    </source>
</evidence>
<evidence type="ECO:0000269" key="14">
    <source>
    </source>
</evidence>
<evidence type="ECO:0000269" key="15">
    <source>
    </source>
</evidence>
<evidence type="ECO:0000269" key="16">
    <source>
    </source>
</evidence>
<evidence type="ECO:0000269" key="17">
    <source>
    </source>
</evidence>
<evidence type="ECO:0000269" key="18">
    <source>
    </source>
</evidence>
<evidence type="ECO:0000269" key="19">
    <source>
    </source>
</evidence>
<evidence type="ECO:0000269" key="20">
    <source>
    </source>
</evidence>
<evidence type="ECO:0000269" key="21">
    <source>
    </source>
</evidence>
<evidence type="ECO:0000269" key="22">
    <source>
    </source>
</evidence>
<evidence type="ECO:0000269" key="23">
    <source>
    </source>
</evidence>
<evidence type="ECO:0000269" key="24">
    <source>
    </source>
</evidence>
<evidence type="ECO:0000269" key="25">
    <source>
    </source>
</evidence>
<evidence type="ECO:0000269" key="26">
    <source>
    </source>
</evidence>
<evidence type="ECO:0000269" key="27">
    <source>
    </source>
</evidence>
<evidence type="ECO:0000269" key="28">
    <source>
    </source>
</evidence>
<evidence type="ECO:0000269" key="29">
    <source>
    </source>
</evidence>
<evidence type="ECO:0000269" key="30">
    <source>
    </source>
</evidence>
<evidence type="ECO:0000303" key="31">
    <source>
    </source>
</evidence>
<evidence type="ECO:0000303" key="32">
    <source>
    </source>
</evidence>
<evidence type="ECO:0000303" key="33">
    <source>
    </source>
</evidence>
<evidence type="ECO:0000303" key="34">
    <source>
    </source>
</evidence>
<evidence type="ECO:0000303" key="35">
    <source>
    </source>
</evidence>
<evidence type="ECO:0000305" key="36"/>
<evidence type="ECO:0000305" key="37">
    <source>
    </source>
</evidence>
<evidence type="ECO:0000312" key="38">
    <source>
        <dbReference type="HGNC" id="HGNC:12801"/>
    </source>
</evidence>
<evidence type="ECO:0007744" key="39">
    <source>
    </source>
</evidence>
<accession>P17861</accession>
<accession>Q8WYK6</accession>
<accession>Q969P1</accession>
<accession>Q96BD7</accession>
<reference key="1">
    <citation type="journal article" date="1990" name="Science">
        <title>A new member of the leucine zipper class of proteins that binds to the HLA DR alpha promoter.</title>
        <authorList>
            <person name="Liou H.-C."/>
            <person name="Boothby M.R."/>
            <person name="Finn P.W."/>
            <person name="Davidon R."/>
            <person name="Nabavi N."/>
            <person name="Zeleznik-Le N.J."/>
            <person name="Ting J.P.-Y."/>
            <person name="Glimcher L.H."/>
        </authorList>
    </citation>
    <scope>NUCLEOTIDE SEQUENCE [MRNA] (ISOFORM 1)</scope>
    <scope>FUNCTION (ISOFORM 1)</scope>
    <scope>DNA-BINDING (ISOFORM 1)</scope>
    <source>
        <tissue>B-cell</tissue>
    </source>
</reference>
<reference key="2">
    <citation type="journal article" date="1990" name="EMBO J.">
        <title>Multiple cDNA clones encoding nuclear proteins that bind to the tax-dependent enhancer of HTLV-1: all contain a leucine zipper structure and basic amino acid domain.</title>
        <authorList>
            <person name="Yoshimura T."/>
            <person name="Fujisawa J."/>
            <person name="Yoshida M."/>
        </authorList>
    </citation>
    <scope>NUCLEOTIDE SEQUENCE [MRNA] (ISOFORM 1)</scope>
    <scope>FUNCTION (ISOFORM 1)</scope>
    <scope>DNA-BINDING (ISOFORM 1)</scope>
</reference>
<reference key="3">
    <citation type="journal article" date="1993" name="J. Biol. Chem.">
        <title>The regulatory gene, hXBP-1, and its target, HLA-DRA, utilize both common and distinct regulatory elements and protein complexes.</title>
        <authorList>
            <person name="Ponath P.D."/>
            <person name="Fass D."/>
            <person name="Liou H.C."/>
            <person name="Glimcher L.H."/>
            <person name="Strominger J.L."/>
        </authorList>
    </citation>
    <scope>NUCLEOTIDE SEQUENCE [GENOMIC DNA]</scope>
    <scope>FUNCTION</scope>
    <scope>DNA-BINDING</scope>
</reference>
<reference key="4">
    <citation type="journal article" date="2001" name="Cell">
        <title>XBP1 mRNA is induced by ATF6 and spliced by IRE1 in response to ER stress to produce a highly active transcription factor.</title>
        <authorList>
            <person name="Yoshida H."/>
            <person name="Matsui T."/>
            <person name="Yamamoto A."/>
            <person name="Okada T."/>
            <person name="Mori K."/>
        </authorList>
    </citation>
    <scope>NUCLEOTIDE SEQUENCE [MRNA] (ISOFORMS 1 AND 2)</scope>
    <scope>FUNCTION (ISOFORM 2)</scope>
    <scope>ALTERNATIVE SPLICING (ISOFORM 2)</scope>
    <scope>DNA-BINDING (ISOFORMS 1 AND 2)</scope>
    <scope>INDUCTION (ISOFORM 2)</scope>
    <scope>ER STRESS-MEDIATED DOWN-REGULATION (ISOFORM 1)</scope>
    <scope>DOMAIN (ISOFORMS 1 AND 2)</scope>
</reference>
<reference key="5">
    <citation type="journal article" date="2004" name="Genome Biol.">
        <title>A genome annotation-driven approach to cloning the human ORFeome.</title>
        <authorList>
            <person name="Collins J.E."/>
            <person name="Wright C.L."/>
            <person name="Edwards C.A."/>
            <person name="Davis M.P."/>
            <person name="Grinham J.A."/>
            <person name="Cole C.G."/>
            <person name="Goward M.E."/>
            <person name="Aguado B."/>
            <person name="Mallya M."/>
            <person name="Mokrab Y."/>
            <person name="Huckle E.J."/>
            <person name="Beare D.M."/>
            <person name="Dunham I."/>
        </authorList>
    </citation>
    <scope>NUCLEOTIDE SEQUENCE [LARGE SCALE MRNA] (ISOFORM 1)</scope>
</reference>
<reference key="6">
    <citation type="journal article" date="1999" name="Nature">
        <title>The DNA sequence of human chromosome 22.</title>
        <authorList>
            <person name="Dunham I."/>
            <person name="Hunt A.R."/>
            <person name="Collins J.E."/>
            <person name="Bruskiewich R."/>
            <person name="Beare D.M."/>
            <person name="Clamp M."/>
            <person name="Smink L.J."/>
            <person name="Ainscough R."/>
            <person name="Almeida J.P."/>
            <person name="Babbage A.K."/>
            <person name="Bagguley C."/>
            <person name="Bailey J."/>
            <person name="Barlow K.F."/>
            <person name="Bates K.N."/>
            <person name="Beasley O.P."/>
            <person name="Bird C.P."/>
            <person name="Blakey S.E."/>
            <person name="Bridgeman A.M."/>
            <person name="Buck D."/>
            <person name="Burgess J."/>
            <person name="Burrill W.D."/>
            <person name="Burton J."/>
            <person name="Carder C."/>
            <person name="Carter N.P."/>
            <person name="Chen Y."/>
            <person name="Clark G."/>
            <person name="Clegg S.M."/>
            <person name="Cobley V.E."/>
            <person name="Cole C.G."/>
            <person name="Collier R.E."/>
            <person name="Connor R."/>
            <person name="Conroy D."/>
            <person name="Corby N.R."/>
            <person name="Coville G.J."/>
            <person name="Cox A.V."/>
            <person name="Davis J."/>
            <person name="Dawson E."/>
            <person name="Dhami P.D."/>
            <person name="Dockree C."/>
            <person name="Dodsworth S.J."/>
            <person name="Durbin R.M."/>
            <person name="Ellington A.G."/>
            <person name="Evans K.L."/>
            <person name="Fey J.M."/>
            <person name="Fleming K."/>
            <person name="French L."/>
            <person name="Garner A.A."/>
            <person name="Gilbert J.G.R."/>
            <person name="Goward M.E."/>
            <person name="Grafham D.V."/>
            <person name="Griffiths M.N.D."/>
            <person name="Hall C."/>
            <person name="Hall R.E."/>
            <person name="Hall-Tamlyn G."/>
            <person name="Heathcott R.W."/>
            <person name="Ho S."/>
            <person name="Holmes S."/>
            <person name="Hunt S.E."/>
            <person name="Jones M.C."/>
            <person name="Kershaw J."/>
            <person name="Kimberley A.M."/>
            <person name="King A."/>
            <person name="Laird G.K."/>
            <person name="Langford C.F."/>
            <person name="Leversha M.A."/>
            <person name="Lloyd C."/>
            <person name="Lloyd D.M."/>
            <person name="Martyn I.D."/>
            <person name="Mashreghi-Mohammadi M."/>
            <person name="Matthews L.H."/>
            <person name="Mccann O.T."/>
            <person name="Mcclay J."/>
            <person name="Mclaren S."/>
            <person name="McMurray A.A."/>
            <person name="Milne S.A."/>
            <person name="Mortimore B.J."/>
            <person name="Odell C.N."/>
            <person name="Pavitt R."/>
            <person name="Pearce A.V."/>
            <person name="Pearson D."/>
            <person name="Phillimore B.J.C.T."/>
            <person name="Phillips S.H."/>
            <person name="Plumb R.W."/>
            <person name="Ramsay H."/>
            <person name="Ramsey Y."/>
            <person name="Rogers L."/>
            <person name="Ross M.T."/>
            <person name="Scott C.E."/>
            <person name="Sehra H.K."/>
            <person name="Skuce C.D."/>
            <person name="Smalley S."/>
            <person name="Smith M.L."/>
            <person name="Soderlund C."/>
            <person name="Spragon L."/>
            <person name="Steward C.A."/>
            <person name="Sulston J.E."/>
            <person name="Swann R.M."/>
            <person name="Vaudin M."/>
            <person name="Wall M."/>
            <person name="Wallis J.M."/>
            <person name="Whiteley M.N."/>
            <person name="Willey D.L."/>
            <person name="Williams L."/>
            <person name="Williams S.A."/>
            <person name="Williamson H."/>
            <person name="Wilmer T.E."/>
            <person name="Wilming L."/>
            <person name="Wright C.L."/>
            <person name="Hubbard T."/>
            <person name="Bentley D.R."/>
            <person name="Beck S."/>
            <person name="Rogers J."/>
            <person name="Shimizu N."/>
            <person name="Minoshima S."/>
            <person name="Kawasaki K."/>
            <person name="Sasaki T."/>
            <person name="Asakawa S."/>
            <person name="Kudoh J."/>
            <person name="Shintani A."/>
            <person name="Shibuya K."/>
            <person name="Yoshizaki Y."/>
            <person name="Aoki N."/>
            <person name="Mitsuyama S."/>
            <person name="Roe B.A."/>
            <person name="Chen F."/>
            <person name="Chu L."/>
            <person name="Crabtree J."/>
            <person name="Deschamps S."/>
            <person name="Do A."/>
            <person name="Do T."/>
            <person name="Dorman A."/>
            <person name="Fang F."/>
            <person name="Fu Y."/>
            <person name="Hu P."/>
            <person name="Hua A."/>
            <person name="Kenton S."/>
            <person name="Lai H."/>
            <person name="Lao H.I."/>
            <person name="Lewis J."/>
            <person name="Lewis S."/>
            <person name="Lin S.-P."/>
            <person name="Loh P."/>
            <person name="Malaj E."/>
            <person name="Nguyen T."/>
            <person name="Pan H."/>
            <person name="Phan S."/>
            <person name="Qi S."/>
            <person name="Qian Y."/>
            <person name="Ray L."/>
            <person name="Ren Q."/>
            <person name="Shaull S."/>
            <person name="Sloan D."/>
            <person name="Song L."/>
            <person name="Wang Q."/>
            <person name="Wang Y."/>
            <person name="Wang Z."/>
            <person name="White J."/>
            <person name="Willingham D."/>
            <person name="Wu H."/>
            <person name="Yao Z."/>
            <person name="Zhan M."/>
            <person name="Zhang G."/>
            <person name="Chissoe S."/>
            <person name="Murray J."/>
            <person name="Miller N."/>
            <person name="Minx P."/>
            <person name="Fulton R."/>
            <person name="Johnson D."/>
            <person name="Bemis G."/>
            <person name="Bentley D."/>
            <person name="Bradshaw H."/>
            <person name="Bourne S."/>
            <person name="Cordes M."/>
            <person name="Du Z."/>
            <person name="Fulton L."/>
            <person name="Goela D."/>
            <person name="Graves T."/>
            <person name="Hawkins J."/>
            <person name="Hinds K."/>
            <person name="Kemp K."/>
            <person name="Latreille P."/>
            <person name="Layman D."/>
            <person name="Ozersky P."/>
            <person name="Rohlfing T."/>
            <person name="Scheet P."/>
            <person name="Walker C."/>
            <person name="Wamsley A."/>
            <person name="Wohldmann P."/>
            <person name="Pepin K."/>
            <person name="Nelson J."/>
            <person name="Korf I."/>
            <person name="Bedell J.A."/>
            <person name="Hillier L.W."/>
            <person name="Mardis E."/>
            <person name="Waterston R."/>
            <person name="Wilson R."/>
            <person name="Emanuel B.S."/>
            <person name="Shaikh T."/>
            <person name="Kurahashi H."/>
            <person name="Saitta S."/>
            <person name="Budarf M.L."/>
            <person name="McDermid H.E."/>
            <person name="Johnson A."/>
            <person name="Wong A.C.C."/>
            <person name="Morrow B.E."/>
            <person name="Edelmann L."/>
            <person name="Kim U.J."/>
            <person name="Shizuya H."/>
            <person name="Simon M.I."/>
            <person name="Dumanski J.P."/>
            <person name="Peyrard M."/>
            <person name="Kedra D."/>
            <person name="Seroussi E."/>
            <person name="Fransson I."/>
            <person name="Tapia I."/>
            <person name="Bruder C.E."/>
            <person name="O'Brien K.P."/>
            <person name="Wilkinson P."/>
            <person name="Bodenteich A."/>
            <person name="Hartman K."/>
            <person name="Hu X."/>
            <person name="Khan A.S."/>
            <person name="Lane L."/>
            <person name="Tilahun Y."/>
            <person name="Wright H."/>
        </authorList>
    </citation>
    <scope>NUCLEOTIDE SEQUENCE [LARGE SCALE GENOMIC DNA]</scope>
</reference>
<reference key="7">
    <citation type="journal article" date="2004" name="Genome Res.">
        <title>The status, quality, and expansion of the NIH full-length cDNA project: the Mammalian Gene Collection (MGC).</title>
        <authorList>
            <consortium name="The MGC Project Team"/>
        </authorList>
    </citation>
    <scope>NUCLEOTIDE SEQUENCE [LARGE SCALE MRNA] (ISOFORM 1)</scope>
    <source>
        <tissue>Ovary</tissue>
        <tissue>Placenta</tissue>
    </source>
</reference>
<reference key="8">
    <citation type="journal article" date="1991" name="Proc. Natl. Acad. Sci. U.S.A.">
        <title>Human X-box-binding protein 1 is required for the transcription of a subset of human class II major histocompatibility genes and forms a heterodimer with c-fos.</title>
        <authorList>
            <person name="Ono S.J."/>
            <person name="Liou H.C."/>
            <person name="Davidon R."/>
            <person name="Strominger J.L."/>
            <person name="Glimcher L.H."/>
        </authorList>
    </citation>
    <scope>FUNCTION (ISOFORM 1)</scope>
    <scope>DNA-BINDING (ISOFORM 1)</scope>
    <scope>INTERACTION WITH FOS (ISOFORM 1)</scope>
</reference>
<reference key="9">
    <citation type="journal article" date="1996" name="J. Exp. Med.">
        <title>Transcription factor B cell lineage-specific activator protein regulates the gene for human X-box binding protein 1.</title>
        <authorList>
            <person name="Reimold A.M."/>
            <person name="Ponath P.D."/>
            <person name="Li Y.S."/>
            <person name="Hardy R.R."/>
            <person name="David C.S."/>
            <person name="Strominger J.L."/>
            <person name="Glimcher L.H."/>
        </authorList>
    </citation>
    <scope>INDUCTION</scope>
</reference>
<reference key="10">
    <citation type="journal article" date="1996" name="Nucleic Acids Res.">
        <title>The basic domain/leucine zipper protein hXBP-1 preferentially binds to and transactivates CRE-like sequences containing an ACGT core.</title>
        <authorList>
            <person name="Clauss I.M."/>
            <person name="Chu M."/>
            <person name="Zhao J.-L."/>
            <person name="Glimcher L.H."/>
        </authorList>
    </citation>
    <scope>FUNCTION (ISOFORM 1)</scope>
    <scope>DNA-BINDING (ISOFORM 1)</scope>
    <scope>DOMAIN (ISOFORMS 1 AND 2)</scope>
</reference>
<reference key="11">
    <citation type="journal article" date="1999" name="Int. J. Oncol.">
        <title>Identification of c-myc promoter-binding protein and X-box binding protein 1 as interleukin-6 target genes in human multiple myeloma cells.</title>
        <authorList>
            <person name="Wen X.Y."/>
            <person name="Stewart A.K."/>
            <person name="Sooknanan R.R."/>
            <person name="Henderson G."/>
            <person name="Hawley T.S."/>
            <person name="Reimold A.M."/>
            <person name="Glimcher L.H."/>
            <person name="Baumann H."/>
            <person name="Malek L.T."/>
            <person name="Hawley R.G."/>
        </authorList>
    </citation>
    <scope>INDUCTION</scope>
</reference>
<reference key="12">
    <citation type="journal article" date="2001" name="Nature">
        <title>Plasma cell differentiation requires the transcription factor XBP-1.</title>
        <authorList>
            <person name="Reimold A.M."/>
            <person name="Iwakoshi N.N."/>
            <person name="Manis J."/>
            <person name="Vallabhajosyula P."/>
            <person name="Szomolanyi-Tsuda E."/>
            <person name="Gravallese E.M."/>
            <person name="Friend D."/>
            <person name="Grusby M.J."/>
            <person name="Alt F."/>
            <person name="Glimcher L.H."/>
        </authorList>
    </citation>
    <scope>FUNCTION</scope>
    <scope>INDUCTION</scope>
    <scope>TISSUE SPECIFICITY</scope>
</reference>
<reference key="13">
    <citation type="journal article" date="2003" name="Nat. Genet.">
        <title>Impaired feedback regulation of XBP1 as a genetic risk factor for bipolar disorder.</title>
        <authorList>
            <person name="Kakiuchi C."/>
            <person name="Iwamoto K."/>
            <person name="Ishiwata M."/>
            <person name="Bundo M."/>
            <person name="Kasahara T."/>
            <person name="Kusumi I."/>
            <person name="Tsujita T."/>
            <person name="Okazaki Y."/>
            <person name="Nanko S."/>
            <person name="Kunugi H."/>
            <person name="Sasaki T."/>
            <person name="Kato T."/>
        </authorList>
    </citation>
    <scope>INVOLVEMENT IN SUSCEPTIBILITY TO MAJOR AFFECTIVE DISORDER TYPE 7</scope>
</reference>
<reference key="14">
    <citation type="journal article" date="2004" name="J. Cell Biol.">
        <title>XBP1: a link between the unfolded protein response, lipid biosynthesis, and biogenesis of the endoplasmic reticulum.</title>
        <authorList>
            <person name="Sriburi R."/>
            <person name="Jackowski S."/>
            <person name="Mori K."/>
            <person name="Brewer J.W."/>
        </authorList>
    </citation>
    <scope>FUNCTION (ISOFORM 2)</scope>
</reference>
<reference key="15">
    <citation type="journal article" date="2006" name="Cell Struct. Funct.">
        <title>XBP1 is critical to protect cells from endoplasmic reticulum stress: evidence from Site-2 protease-deficient Chinese hamster ovary cells.</title>
        <authorList>
            <person name="Yoshida H."/>
            <person name="Nadanaka S."/>
            <person name="Sato R."/>
            <person name="Mori K."/>
        </authorList>
    </citation>
    <scope>INDUCTION (ISOFORM 2)</scope>
</reference>
<reference key="16">
    <citation type="journal article" date="2006" name="J. Cell Biol.">
        <title>pXBP1(U) encoded in XBP1 pre-mRNA negatively regulates unfolded protein response activator pXBP1(S) in mammalian ER stress response.</title>
        <authorList>
            <person name="Yoshida H."/>
            <person name="Oku M."/>
            <person name="Suzuki M."/>
            <person name="Mori K."/>
        </authorList>
    </citation>
    <scope>FUNCTION (ISOFORMS 1 AND 2)</scope>
    <scope>INTERACTION WITH XBP1 ISOFORM 2 (ISOFORM 1)</scope>
    <scope>SUBCELLULAR LOCATION (ISOFORMS 1 AND 2)</scope>
    <scope>INDUCTION (ISOFORMS 1 AND 2)</scope>
    <scope>STRESS-MEDIATED DOWN-REGULATION (ISOFORM 1)</scope>
    <scope>DOMAIN (ISOFORMS 1 AND 2)</scope>
</reference>
<reference key="17">
    <citation type="journal article" date="2007" name="Dev. Cell">
        <title>Transcriptional induction of mammalian ER quality control proteins is mediated by single or combined action of ATF6alpha and XBP1.</title>
        <authorList>
            <person name="Yamamoto K."/>
            <person name="Sato T."/>
            <person name="Matsui T."/>
            <person name="Sato M."/>
            <person name="Okada T."/>
            <person name="Yoshida H."/>
            <person name="Harada A."/>
            <person name="Mori K."/>
        </authorList>
    </citation>
    <scope>INTERACTION WITH ATF6 (ISOFORM 2)</scope>
</reference>
<reference key="18">
    <citation type="journal article" date="2009" name="J. Cell Sci.">
        <title>Unconventional splicing of XBP1 mRNA occurs in the cytoplasm during the mammalian unfolded protein response.</title>
        <authorList>
            <person name="Uemura A."/>
            <person name="Oku M."/>
            <person name="Mori K."/>
            <person name="Yoshida H."/>
        </authorList>
    </citation>
    <scope>UNCONVENTIONAL ALTERNATIVE SPLICING (ISOFORM 2)</scope>
</reference>
<reference key="19">
    <citation type="journal article" date="2009" name="Mol. Cell">
        <title>Cotranslational targeting of XBP1 protein to the membrane promotes cytoplasmic splicing of its own mRNA.</title>
        <authorList>
            <person name="Yanagitani K."/>
            <person name="Imagawa Y."/>
            <person name="Iwawaki T."/>
            <person name="Hosoda A."/>
            <person name="Saito M."/>
            <person name="Kimata Y."/>
            <person name="Kohno K."/>
        </authorList>
    </citation>
    <scope>FUNCTION (ISOFORM 1)</scope>
    <scope>SUBCELLULAR LOCATION (ISOFORMS 1 AND 2)</scope>
    <scope>TOPOLOGY (ISOFORM 1)</scope>
    <scope>DOMAIN (ISOFORM 1)</scope>
    <scope>MUTAGENESIS OF TRP-189; VAL-193; LEU-194; LEU-196; ILE-198 AND TRP-205</scope>
</reference>
<reference key="20">
    <citation type="journal article" date="2009" name="Proc. Natl. Acad. Sci. U.S.A.">
        <title>Sustained activation of XBP1 splicing leads to endothelial apoptosis and atherosclerosis development in response to disturbed flow.</title>
        <authorList>
            <person name="Zeng L."/>
            <person name="Zampetaki A."/>
            <person name="Margariti A."/>
            <person name="Pepe A.E."/>
            <person name="Alam S."/>
            <person name="Martin D."/>
            <person name="Xiao Q."/>
            <person name="Wang W."/>
            <person name="Jin Z.G."/>
            <person name="Cockerill G."/>
            <person name="Mori K."/>
            <person name="Li Y.S."/>
            <person name="Hu Y."/>
            <person name="Chien S."/>
            <person name="Xu Q."/>
        </authorList>
    </citation>
    <scope>FUNCTION (ISOFORM 2)</scope>
    <scope>DNA-BINDING (ISOFORMS 1 AND 2)</scope>
    <scope>INDUCTION (ISOFORMS 1 AND 2)</scope>
    <scope>TISSUE SPECIFICITY (ISOFORMS 1 AND 2)</scope>
</reference>
<reference key="21">
    <citation type="journal article" date="2010" name="Nat. Med.">
        <title>A regulatory subunit of phosphoinositide 3-kinase increases the nuclear accumulation of X-box-binding protein-1 to modulate the unfolded protein response.</title>
        <authorList>
            <person name="Winnay J.N."/>
            <person name="Boucher J."/>
            <person name="Mori M.A."/>
            <person name="Ueki K."/>
            <person name="Kahn C.R."/>
        </authorList>
    </citation>
    <scope>FUNCTION</scope>
    <scope>INTERACTION WITH PIK3R1 (ISOFORM 2)</scope>
    <scope>SUBCELLULAR LOCATION (ISOFORMS 1 AND 2)</scope>
</reference>
<reference key="22">
    <citation type="journal article" date="2011" name="Biochem. J.">
        <title>Regulation of unfolded protein response modulator XBP1s by acetylation and deacetylation.</title>
        <authorList>
            <person name="Wang F.M."/>
            <person name="Chen Y.J."/>
            <person name="Ouyang H.J."/>
        </authorList>
    </citation>
    <scope>ACETYLATION BY EP300 (ISOFORM 2)</scope>
    <scope>DEACETYLATION BY SIRT1 (ISOFORM 2)</scope>
    <scope>SUBCELLULAR LOCATION (ISOFORM 2)</scope>
</reference>
<reference key="23">
    <citation type="journal article" date="2011" name="Science">
        <title>Translational pausing ensures membrane targeting and cytoplasmic splicing of XBP1u mRNA.</title>
        <authorList>
            <person name="Yanagitani K."/>
            <person name="Kimata Y."/>
            <person name="Kadokura H."/>
            <person name="Kohno K."/>
        </authorList>
    </citation>
    <scope>FUNCTION (ISOFORM 1)</scope>
    <scope>DOMAIN (ISOFORM 1)</scope>
    <scope>MUTAGENESIS OF LEU-246; SER-255 AND TRP-256</scope>
</reference>
<reference key="24">
    <citation type="journal article" date="2013" name="Circulation">
        <title>Vascular endothelial cell growth-activated XBP1 splicing in endothelial cells is crucial for angiogenesis.</title>
        <authorList>
            <person name="Zeng L."/>
            <person name="Xiao Q."/>
            <person name="Chen M."/>
            <person name="Margariti A."/>
            <person name="Martin D."/>
            <person name="Ivetic A."/>
            <person name="Xu H."/>
            <person name="Mason J."/>
            <person name="Wang W."/>
            <person name="Cockerill G."/>
            <person name="Mori K."/>
            <person name="Li J.Y."/>
            <person name="Chien S."/>
            <person name="Hu Y."/>
            <person name="Xu Q."/>
        </authorList>
    </citation>
    <scope>FUNCTION (ISOFORMS 1 AND 2)</scope>
    <scope>SUBCELLULAR LOCATION</scope>
    <scope>INDUCTION (ISOFORM 2)</scope>
</reference>
<reference key="25">
    <citation type="journal article" date="2013" name="J. Biol. Chem.">
        <title>XBP1 mRNA splicing triggers an autophagic response in endothelial cells through BECLIN-1 transcriptional activation.</title>
        <authorList>
            <person name="Margariti A."/>
            <person name="Li H."/>
            <person name="Chen T."/>
            <person name="Martin D."/>
            <person name="Vizcay-Barrena G."/>
            <person name="Alam S."/>
            <person name="Karamariti E."/>
            <person name="Xiao Q."/>
            <person name="Zampetaki A."/>
            <person name="Zhang Z."/>
            <person name="Wang W."/>
            <person name="Jiang Z."/>
            <person name="Gao C."/>
            <person name="Ma B."/>
            <person name="Chen Y.G."/>
            <person name="Cockerill G."/>
            <person name="Hu Y."/>
            <person name="Xu Q."/>
            <person name="Zeng L."/>
        </authorList>
    </citation>
    <scope>FUNCTION (ISOFORM 2)</scope>
    <scope>DNA-BINDING (ISOFORM 2)</scope>
    <scope>INDUCTION (ISOFORM 2)</scope>
</reference>
<reference key="26">
    <citation type="journal article" date="2013" name="J. Proteome Res.">
        <title>Toward a comprehensive characterization of a human cancer cell phosphoproteome.</title>
        <authorList>
            <person name="Zhou H."/>
            <person name="Di Palma S."/>
            <person name="Preisinger C."/>
            <person name="Peng M."/>
            <person name="Polat A.N."/>
            <person name="Heck A.J."/>
            <person name="Mohammed S."/>
        </authorList>
    </citation>
    <scope>PHOSPHORYLATION [LARGE SCALE ANALYSIS] AT SER-47 AND SER-68</scope>
    <scope>IDENTIFICATION BY MASS SPECTROMETRY [LARGE SCALE ANALYSIS]</scope>
    <source>
        <tissue>Erythroleukemia</tissue>
    </source>
</reference>
<reference key="27">
    <citation type="journal article" date="2015" name="Cell. Signal.">
        <title>XBP1 induces snail expression to promote epithelial-to-mesenchymal transition and invasion of breast cancer cells.</title>
        <authorList>
            <person name="Li H."/>
            <person name="Chen X."/>
            <person name="Gao Y."/>
            <person name="Wu J."/>
            <person name="Zeng F."/>
            <person name="Song F."/>
        </authorList>
    </citation>
    <scope>FUNCTION (ISOFORM 2)</scope>
    <scope>TISSUE SPECIFICITY</scope>
</reference>
<reference key="28">
    <citation type="journal article" date="2014" name="EMBO J.">
        <title>Signal peptide peptidase functions in ERAD to cleave the unfolded protein response regulator XBP1u.</title>
        <authorList>
            <person name="Chen C.Y."/>
            <person name="Malchus N.S."/>
            <person name="Hehn B."/>
            <person name="Stelzer W."/>
            <person name="Avci D."/>
            <person name="Langosch D."/>
            <person name="Lemberg M.K."/>
        </authorList>
    </citation>
    <scope>FUNCTION (ISOFORMS 1 AND 2)</scope>
    <scope>INTERACTION WITH DERL1; HM13; RNF139 AND XBP1 ISOFORM 2 (ISOFORM 1)</scope>
    <scope>TOPOLOGY (ISOFORM 1)</scope>
    <scope>PROTEOLYTIC CLEAVAGE (ISOFORM 1)</scope>
    <scope>SUBCELLULAR LOCATION (ISOFORM 1 AND CYTOPLASMIC FORM)</scope>
    <scope>UBIQUITINATION (ISOFORM 1 AND LUMINAL FORM)</scope>
    <scope>STRESS-MEDIATED DOWN-REGULATION (ISOFORM 2)</scope>
    <scope>MUTAGENESIS OF GLN-197; GLN-199; SER-200; SER-203; THR-212; CYS-215 AND ARG-232</scope>
</reference>
<reference key="29">
    <citation type="journal article" date="2014" name="J. Biol. Chem.">
        <title>Unspliced X-box-binding protein 1 (XBP1) protects endothelial cells from oxidative stress through interaction with histone deacetylase 3.</title>
        <authorList>
            <person name="Martin D."/>
            <person name="Li Y."/>
            <person name="Yang J."/>
            <person name="Wang G."/>
            <person name="Margariti A."/>
            <person name="Jiang Z."/>
            <person name="Yu H."/>
            <person name="Zampetaki A."/>
            <person name="Hu Y."/>
            <person name="Xu Q."/>
            <person name="Zeng L."/>
        </authorList>
    </citation>
    <scope>FUNCTION (ISOFORM 1)</scope>
    <scope>DNA-BINDING (ISOFORMS 1 AND 2)</scope>
    <scope>INTERACTION WITH HDAC3 AND AKT1 (ISOFORM 1)</scope>
    <scope>SUBCELLULAR LOCATION (ISOFORM 1)</scope>
    <scope>INDUCTION (ISOFORMS 1 AND 2)</scope>
</reference>
<reference key="30">
    <citation type="journal article" date="2006" name="Science">
        <title>The consensus coding sequences of human breast and colorectal cancers.</title>
        <authorList>
            <person name="Sjoeblom T."/>
            <person name="Jones S."/>
            <person name="Wood L.D."/>
            <person name="Parsons D.W."/>
            <person name="Lin J."/>
            <person name="Barber T.D."/>
            <person name="Mandelker D."/>
            <person name="Leary R.J."/>
            <person name="Ptak J."/>
            <person name="Silliman N."/>
            <person name="Szabo S."/>
            <person name="Buckhaults P."/>
            <person name="Farrell C."/>
            <person name="Meeh P."/>
            <person name="Markowitz S.D."/>
            <person name="Willis J."/>
            <person name="Dawson D."/>
            <person name="Willson J.K.V."/>
            <person name="Gazdar A.F."/>
            <person name="Hartigan J."/>
            <person name="Wu L."/>
            <person name="Liu C."/>
            <person name="Parmigiani G."/>
            <person name="Park B.H."/>
            <person name="Bachman K.E."/>
            <person name="Papadopoulos N."/>
            <person name="Vogelstein B."/>
            <person name="Kinzler K.W."/>
            <person name="Velculescu V.E."/>
        </authorList>
    </citation>
    <scope>VARIANT [LARGE SCALE ANALYSIS] VAL-12</scope>
</reference>
<reference key="31">
    <citation type="journal article" date="2007" name="Breast Cancer Res.">
        <title>Somatic sequence alterations in twenty-one genes selected by expression profile analysis of breast carcinomas.</title>
        <authorList>
            <person name="Chanock S.J."/>
            <person name="Burdett L."/>
            <person name="Yeager M."/>
            <person name="Llaca V."/>
            <person name="Langeroed A."/>
            <person name="Presswalla S."/>
            <person name="Kaaresen R."/>
            <person name="Strausberg R.L."/>
            <person name="Gerhard D.S."/>
            <person name="Kristensen V."/>
            <person name="Perou C.M."/>
            <person name="Boerresen-Dale A.-L."/>
        </authorList>
    </citation>
    <scope>VARIANT LYS-232</scope>
</reference>
<feature type="chain" id="PRO_0000076543" description="X-box-binding protein 1">
    <location>
        <begin position="1"/>
        <end position="261"/>
    </location>
</feature>
<feature type="chain" id="PRO_0000431891" description="X-box-binding protein 1, cytoplasmic form" evidence="35">
    <location>
        <begin position="1"/>
        <end position="193"/>
    </location>
</feature>
<feature type="chain" id="PRO_0000431892" description="X-box-binding protein 1, luminal form" evidence="35">
    <location>
        <begin position="196"/>
        <end position="261"/>
    </location>
</feature>
<feature type="topological domain" description="Cytoplasmic" evidence="26">
    <location>
        <begin position="1"/>
        <end position="185"/>
    </location>
</feature>
<feature type="transmembrane region" description="Helical; Signal-anchor for type II membrane protein" evidence="2 26 35">
    <location>
        <begin position="186"/>
        <end position="203"/>
    </location>
</feature>
<feature type="topological domain" description="Lumenal" evidence="26">
    <location>
        <begin position="204"/>
        <end position="261"/>
    </location>
</feature>
<feature type="domain" description="bZIP" evidence="3">
    <location>
        <begin position="70"/>
        <end position="133"/>
    </location>
</feature>
<feature type="region of interest" description="Disordered" evidence="4">
    <location>
        <begin position="44"/>
        <end position="93"/>
    </location>
</feature>
<feature type="region of interest" description="Basic motif" evidence="3">
    <location>
        <begin position="72"/>
        <end position="94"/>
    </location>
</feature>
<feature type="region of interest" description="Nuclear localization signal (NLS); in isoforms 1 and isoform 2" evidence="9">
    <location>
        <begin position="75"/>
        <end position="92"/>
    </location>
</feature>
<feature type="region of interest" description="Leucine-zipper" evidence="3">
    <location>
        <begin position="98"/>
        <end position="133"/>
    </location>
</feature>
<feature type="region of interest" description="Necessary for the translational pausing of its own mRNA" evidence="20">
    <location>
        <begin position="235"/>
        <end position="261"/>
    </location>
</feature>
<feature type="site" description="Cleavage; by HM13/SPP" evidence="35">
    <location>
        <begin position="194"/>
        <end position="195"/>
    </location>
</feature>
<feature type="modified residue" description="Phosphoserine" evidence="39">
    <location>
        <position position="47"/>
    </location>
</feature>
<feature type="modified residue" description="Phosphoserine" evidence="39">
    <location>
        <position position="68"/>
    </location>
</feature>
<feature type="splice variant" id="VSP_012936" description="In isoform 2." evidence="31">
    <original>LRLRAPLQQVQAQLSPLQNISPWILAVLTLQIQSLISCWAFWTTWTQSCSSNALPQSLPAWRSSQRSTQKDPVPYQPPFLCQWGRHQPSWKPLMN</original>
    <variation>GAGPVVTPPEHLPMDSGGIDSSDSESDILLGILDNLDPVMFFKCPSPEPASLEELPEVYPEGPSSLPASLSLSVGTSSAKLEAINELIRFDHIYTKPLVLEIPSETESQANVVVKIEEAPLSPSENDHPEFIVSVKEEPVEDDLVPELGISNLLSSSHCPKPSSCLLDAYSDCGYGGSLSPFSDMSSLLGVNHSWEDTFANELFPQLISV</variation>
    <location>
        <begin position="167"/>
        <end position="261"/>
    </location>
</feature>
<feature type="sequence variant" id="VAR_035998" description="In a breast cancer sample; somatic mutation." evidence="10">
    <original>D</original>
    <variation>V</variation>
    <location>
        <position position="12"/>
    </location>
</feature>
<feature type="sequence variant" id="VAR_033023" description="In a breast cancer sample; somatic mutation; dbSNP:rs1379560430." evidence="12">
    <original>R</original>
    <variation>K</variation>
    <location>
        <position position="232"/>
    </location>
</feature>
<feature type="mutagenesis site" description="Reduces endoplasmic reticulum localization of its own mRNA; when associated with E-193 and D-196." evidence="15">
    <original>W</original>
    <variation>E</variation>
    <location>
        <position position="189"/>
    </location>
</feature>
<feature type="mutagenesis site" description="Reduces endoplasmic reticulum localization of its own mRNA; when associated with E-189 and D-196." evidence="15">
    <original>V</original>
    <variation>E</variation>
    <location>
        <position position="193"/>
    </location>
</feature>
<feature type="mutagenesis site" description="Reduces endoplasmic reticulum localization of its own mRNA; when associated with D-198 and E-205." evidence="15">
    <original>L</original>
    <variation>E</variation>
    <location>
        <position position="194"/>
    </location>
</feature>
<feature type="mutagenesis site" description="Reduces endoplasmic reticulum localization of its own mRNA; when associated with E-189 and E-193." evidence="15">
    <original>L</original>
    <variation>D</variation>
    <location>
        <position position="196"/>
    </location>
</feature>
<feature type="mutagenesis site" description="Inhibits HM13/SPP-mediated degradation of XBP1; when associated with L-199; L-200 and L-203." evidence="26">
    <original>Q</original>
    <variation>L</variation>
    <location>
        <position position="197"/>
    </location>
</feature>
<feature type="mutagenesis site" description="Reduces endoplasmic reticulum localization of its own mRNA; when associated with E-194 and E-205." evidence="15">
    <original>I</original>
    <variation>D</variation>
    <location>
        <position position="198"/>
    </location>
</feature>
<feature type="mutagenesis site" description="Inhibits HM13/SPP-mediated degradation of XBP1; when associated with L-197; L-200 and L-203." evidence="26">
    <original>Q</original>
    <variation>L</variation>
    <location>
        <position position="199"/>
    </location>
</feature>
<feature type="mutagenesis site" description="Inhibits HM13/SPP-mediated degradation of XBP1; when associated with L-197; L-199 and L-203." evidence="26">
    <original>S</original>
    <variation>L</variation>
    <location>
        <position position="200"/>
    </location>
</feature>
<feature type="mutagenesis site" description="Inhibits HM13/SPP-mediated degradation of XBP1; when associated with L-197; L-199 and L-200." evidence="26">
    <original>S</original>
    <variation>L</variation>
    <location>
        <position position="203"/>
    </location>
</feature>
<feature type="mutagenesis site" description="Reduces endoplasmic reticulum localization of its own mRNA; when associated with E-194 and D-198." evidence="15">
    <original>W</original>
    <variation>E</variation>
    <location>
        <position position="205"/>
    </location>
</feature>
<feature type="mutagenesis site" description="Does not induce glycosylation." evidence="26">
    <original>T</original>
    <variation>N</variation>
    <location>
        <position position="212"/>
    </location>
</feature>
<feature type="mutagenesis site" description="Induces glycosylation." evidence="26">
    <original>C</original>
    <variation>N</variation>
    <location>
        <position position="215"/>
    </location>
</feature>
<feature type="mutagenesis site" description="Induces glycosylation." evidence="26">
    <original>R</original>
    <variation>N</variation>
    <location>
        <position position="232"/>
    </location>
</feature>
<feature type="mutagenesis site" description="Reduces translational pausing, membrane targeting and cytoplasmic splicing of its own mRNA." evidence="20">
    <original>L</original>
    <variation>A</variation>
    <location>
        <position position="246"/>
    </location>
</feature>
<feature type="mutagenesis site" description="Increases translational pausing of its own mRNA." evidence="20">
    <original>S</original>
    <variation>A</variation>
    <location>
        <position position="255"/>
    </location>
</feature>
<feature type="mutagenesis site" description="Reduces translational pausing, membrane targeting and cytoplasmic splicing of its own mRNA." evidence="20">
    <original>W</original>
    <variation>A</variation>
    <location>
        <position position="256"/>
    </location>
</feature>
<feature type="sequence conflict" description="In Ref. 1; AAA36031." evidence="36" ref="1">
    <original>GQA</original>
    <variation>AR</variation>
    <location>
        <begin position="33"/>
        <end position="35"/>
    </location>
</feature>
<feature type="sequence conflict" description="In Ref. 3; L13850." evidence="36" ref="3">
    <original>N</original>
    <variation>T</variation>
    <location>
        <position position="130"/>
    </location>
</feature>
<feature type="sequence conflict" description="In Ref. 3; L13850." evidence="36" ref="3">
    <original>L</original>
    <variation>F</variation>
    <location>
        <position position="196"/>
    </location>
</feature>
<keyword id="KW-0002">3D-structure</keyword>
<keyword id="KW-0007">Acetylation</keyword>
<keyword id="KW-0010">Activator</keyword>
<keyword id="KW-0025">Alternative splicing</keyword>
<keyword id="KW-0037">Angiogenesis</keyword>
<keyword id="KW-0053">Apoptosis</keyword>
<keyword id="KW-0072">Autophagy</keyword>
<keyword id="KW-0165">Cleavage on pair of basic residues</keyword>
<keyword id="KW-0963">Cytoplasm</keyword>
<keyword id="KW-0217">Developmental protein</keyword>
<keyword id="KW-0221">Differentiation</keyword>
<keyword id="KW-0238">DNA-binding</keyword>
<keyword id="KW-0256">Endoplasmic reticulum</keyword>
<keyword id="KW-0444">Lipid biosynthesis</keyword>
<keyword id="KW-0443">Lipid metabolism</keyword>
<keyword id="KW-0472">Membrane</keyword>
<keyword id="KW-0517">Myogenesis</keyword>
<keyword id="KW-0539">Nucleus</keyword>
<keyword id="KW-0553">Oncogene</keyword>
<keyword id="KW-0597">Phosphoprotein</keyword>
<keyword id="KW-0653">Protein transport</keyword>
<keyword id="KW-1267">Proteomics identification</keyword>
<keyword id="KW-1185">Reference proteome</keyword>
<keyword id="KW-0735">Signal-anchor</keyword>
<keyword id="KW-0346">Stress response</keyword>
<keyword id="KW-0804">Transcription</keyword>
<keyword id="KW-0805">Transcription regulation</keyword>
<keyword id="KW-0812">Transmembrane</keyword>
<keyword id="KW-1133">Transmembrane helix</keyword>
<keyword id="KW-0813">Transport</keyword>
<keyword id="KW-0832">Ubl conjugation</keyword>
<keyword id="KW-0834">Unfolded protein response</keyword>
<comment type="function">
    <text evidence="1 6 18 28">Functions as a transcription factor during endoplasmic reticulum (ER) stress by regulating the unfolded protein response (UPR). Required for cardiac myogenesis and hepatogenesis during embryonic development, and the development of secretory tissues such as exocrine pancreas and salivary gland (By similarity). Involved in terminal differentiation of B lymphocytes to plasma cells and production of immunoglobulins (PubMed:11460154). Modulates the cellular response to ER stress in a PIK3R-dependent manner (PubMed:20348923). Binds to the cis-acting X box present in the promoter regions of major histocompatibility complex class II genes (PubMed:8349596). Involved in VEGF-induced endothelial cell (EC) proliferation and retinal blood vessel formation during embryonic development but also for angiogenesis in adult tissues under ischemic conditions. Also functions as a major regulator of the UPR in obesity-induced insulin resistance and type 2 diabetes for the management of obesity and diabetes prevention (By similarity).</text>
</comment>
<comment type="function">
    <molecule>Isoform 1</molecule>
    <text evidence="1 7 9 14 15 16 20 21 23 24 25 26 30">Plays a role in the unconventional cytoplasmic splicing processing of its own mRNA triggered by the endoplasmic reticulum (ER) transmembrane endoribonuclease ERN1: upon ER stress, the emerging XBP1 polypeptide chain, as part of a mRNA-ribosome-nascent chain (R-RNC) complex, cotranslationally recruits its own unprocessed mRNA through transient docking to the ER membrane and translational pausing, therefore facilitating efficient IRE1-mediated XBP1 mRNA isoform 2 production (PubMed:19394296, PubMed:21233347). In endothelial cells (EC), associated with KDR, promotes IRE1-mediated XBP1 mRNA isoform 2 productions in a vascular endothelial growth factor (VEGF)-dependent manner, leading to EC proliferation and angiogenesis (PubMed:23529610). Functions as a negative feed-back regulator of the potent transcription factor XBP1 isoform 2 protein levels through proteasome-mediated degradation, thus preventing the constitutive activation of the ER stress response signaling pathway (PubMed:16461360, PubMed:25239945). Inhibits the transactivation activity of XBP1 isoform 2 in myeloma cells (By similarity). Acts as a weak transcriptional factor (PubMed:8657566). Together with HDAC3, contributes to the activation of NFE2L2-mediated HMOX1 transcription factor gene expression in a PI(3)K/mTORC2/Akt-dependent signaling pathway leading to EC survival under disturbed flow/oxidative stress (PubMed:25190803). Binds to the ER stress response element (ERSE) upon ER stress (PubMed:11779464). Binds to the consensus 5'-GATGACGTG[TG]N(3)[AT]T-3' sequence related to cAMP responsive element (CRE)-like sequences (PubMed:8657566). Binds the Tax-responsive element (TRE) present in the long terminal repeat (LTR) of T-cell leukemia virus type 1 (HTLV-I) and to the TPA response elements (TRE) (PubMed:1903538, PubMed:2196176, PubMed:2321018, PubMed:8657566). Associates preferentially to the HDAC3 gene promoter region in a static flow-dependent manner (PubMed:25190803). Binds to the CDH5/VE-cadherin gene promoter region (PubMed:19416856).</text>
</comment>
<comment type="function">
    <molecule>Isoform 2</molecule>
    <text evidence="1 7 8 16 22 24 25 26 27">Functions as a stress-inducible potent transcriptional activator during endoplasmic reticulum (ER) stress by inducing unfolded protein response (UPR) target genes via binding to the UPR element (UPRE). Up-regulates target genes encoding ER chaperones and ER-associated degradation (ERAD) components to enhance the capacity of productive folding and degradation mechanism, respectively, in order to maintain the homeostasis of the ER under ER stress (PubMed:11779464, PubMed:25239945). Plays a role in the production of immunoglobulins and interleukin-6 in the presence of stimuli required for plasma cell differentiation (By similarity). Induces phospholipid biosynthesis and ER expansion (PubMed:15466483). Contributes to the VEGF-induced endothelial cell (EC) growth and proliferation in a Akt/GSK-dependent and/or -independent signaling pathway, respectively, leading to beta-catenin nuclear translocation and E2F2 gene expression (PubMed:23529610). Promotes umbilical vein EC apoptosis and atherosclerotisis development in a caspase-dependent signaling pathway, and contributes to VEGF-induced EC proliferation and angiogenesis in adult tissues under ischemic conditions (PubMed:19416856, PubMed:23529610). Involved in the regulation of endostatin-induced autophagy in EC through BECN1 transcriptional activation (PubMed:23184933). Plays a role as an oncogene by promoting tumor progression: stimulates zinc finger protein SNAI1 transcription to induce epithelial-to-mesenchymal (EMT) transition, cell migration and invasion of breast cancer cells (PubMed:25280941). Involved in adipocyte differentiation by regulating lipogenic gene expression during lactation. Plays a role in the survival of both dopaminergic neurons of the substantia nigra pars compacta (SNpc), by maintaining protein homeostasis and of myeloma cells. Increases insulin sensitivity in the liver as a response to a high carbohydrate diet, resulting in improved glucose tolerance. Also improves glucose homeostasis in an ER stress- and/or insulin-independent manner through both binding and proteasome-induced degradation of the transcription factor FOXO1, hence resulting in suppression of gluconeogenic genes expression and in a reduction of blood glucose levels. Controls the induction of de novo fatty acid synthesis in hepatocytes by regulating the expression of a subset of lipogenic genes in an ER stress- and UPR-independent manner (By similarity). Associates preferentially to the HDAC3 gene promoter region in a disturbed flow-dependent manner (PubMed:25190803). Binds to the BECN1 gene promoter region (PubMed:23184933). Binds to the CDH5/VE-cadherin gene promoter region (PubMed:19416856). Binds to the ER stress response element (ERSE) upon ER stress (PubMed:11779464). Binds to the 5'-CCACG-3' motif in the PPARG promoter (By similarity).</text>
</comment>
<comment type="subunit">
    <text evidence="1 9 13 14 18 25 26">Isoform 2 interacts with SIRT1. Isoform 2 interacts with PIK3R1 and PIK3R2; the interactions are direct and induce translocation of XBP1 isoform 2 into the nucleus and the unfolded protein response (UPR) XBP1-dependent target genes activation in a ER stress- and/or insulin-dependent but PI3K-independent manner. Isoform 2 interacts with FOXO1; the interaction is direct and leads to FOXO1 ubiquitination and degradation via the proteasome pathway in hepatocytes (By similarity). Isoform 1 interacts with HM13 (PubMed:25239945). Isoform 1 interacts with RNF139; the interaction induces ubiquitination and degradation of isoform 1 (PubMed:25239945). Isoform 1 interacts (via luminal domain) with DERL1; the interaction obviates the need for ectodomain shedding prior HM13/SPP-mediated XBP1 isoform 1 cleavage (PubMed:25239945). Isoform 1 interacts with isoform 2; the interaction sequesters isoform 2 from the nucleus and enhances isoform 2 degradation in the cytoplasm (PubMed:16461360, PubMed:25239945). Isoform 1 interacts with HDAC3 and AKT1; the interactions occur in endothelial cell (EC) under disturbed flow (PubMed:25190803). Isoform 1 interacts with the oncoprotein FOS (PubMed:1903538). Isoform 2 interacts with ATF6; the interaction occurs in a ER stress-dependent manner and is required for DNA binding to the unfolded protein response element (UPRE) (PubMed:17765680). Isoform 2 interacts with PIK3R1; the interaction is direct and induces translocation of XBP1 isoform 2 into the nucleus and the unfolded protein response (UPR) XBP1-dependent target genes activation in a ER stress- and/or insulin-dependent but PI3K-independent manner (PubMed:20348923).</text>
</comment>
<comment type="interaction">
    <interactant intactId="EBI-6942961">
        <id>P17861</id>
    </interactant>
    <interactant intactId="EBI-852157">
        <id>P18850</id>
        <label>ATF6</label>
    </interactant>
    <organismsDiffer>false</organismsDiffer>
    <experiments>4</experiments>
</comment>
<comment type="interaction">
    <interactant intactId="EBI-6942961">
        <id>P17861</id>
    </interactant>
    <interactant intactId="EBI-2841031">
        <id>Q99941</id>
        <label>ATF6B</label>
    </interactant>
    <organismsDiffer>false</organismsDiffer>
    <experiments>2</experiments>
</comment>
<comment type="interaction">
    <interactant intactId="EBI-6942961">
        <id>P17861</id>
    </interactant>
    <interactant intactId="EBI-632965">
        <id>Q9NS37</id>
        <label>CREBZF</label>
    </interactant>
    <organismsDiffer>false</organismsDiffer>
    <experiments>4</experiments>
</comment>
<comment type="interaction">
    <interactant intactId="EBI-6942961">
        <id>P17861</id>
    </interactant>
    <interactant intactId="EBI-447269">
        <id>Q16665</id>
        <label>HIF1A</label>
    </interactant>
    <organismsDiffer>false</organismsDiffer>
    <experiments>3</experiments>
</comment>
<comment type="interaction">
    <interactant intactId="EBI-6942961">
        <id>P17861</id>
    </interactant>
    <interactant intactId="EBI-1050671">
        <id>Q13404</id>
        <label>UBE2V1</label>
    </interactant>
    <organismsDiffer>false</organismsDiffer>
    <experiments>3</experiments>
</comment>
<comment type="interaction">
    <interactant intactId="EBI-6942961">
        <id>P17861</id>
    </interactant>
    <interactant intactId="EBI-6942961">
        <id>P17861</id>
        <label>XBP1</label>
    </interactant>
    <organismsDiffer>false</organismsDiffer>
    <experiments>2</experiments>
</comment>
<comment type="interaction">
    <interactant intactId="EBI-7631279">
        <id>P17861-1</id>
    </interactant>
    <interactant intactId="EBI-347472">
        <id>Q8TCT9</id>
        <label>HM13</label>
    </interactant>
    <organismsDiffer>false</organismsDiffer>
    <experiments>2</experiments>
</comment>
<comment type="subcellular location">
    <subcellularLocation>
        <location evidence="24">Endoplasmic reticulum</location>
    </subcellularLocation>
    <text evidence="24">Colocalizes with ERN1 and KDR in the endoplasmic reticulum in endothelial cells in a vascular endothelial growth factor (VEGF)-dependent manner (PubMed:23529610).</text>
</comment>
<comment type="subcellular location">
    <molecule>Isoform 1</molecule>
    <subcellularLocation>
        <location evidence="9 15">Nucleus</location>
    </subcellularLocation>
    <subcellularLocation>
        <location evidence="9 15 18 25">Cytoplasm</location>
    </subcellularLocation>
    <subcellularLocation>
        <location evidence="26">Endoplasmic reticulum membrane</location>
        <topology evidence="26">Single-pass type II membrane protein</topology>
    </subcellularLocation>
    <subcellularLocation>
        <location evidence="35">Endoplasmic reticulum membrane</location>
        <topology evidence="35">Peripheral membrane protein</topology>
    </subcellularLocation>
    <subcellularLocation>
        <location evidence="15">Membrane</location>
        <topology evidence="32">Peripheral membrane protein</topology>
    </subcellularLocation>
    <text evidence="1 9 15 25">Shows no preferential localization to either the nucleus or the cytoplasm (By similarity). Shuttles between the nucleus and the cytoplasm in a CRM1-dependent manner (PubMed:16461360). Localizes predominantly at the endoplasmic reticulum membrane as a membrane-spanning protein; whereas may be only marginally localized on the cytosolic side of the ER membrane as a peripheral membrane (PubMed:19394296, PubMed:25190803).</text>
</comment>
<comment type="subcellular location">
    <molecule>Isoform 2</molecule>
    <subcellularLocation>
        <location evidence="9 15 18 19">Nucleus</location>
    </subcellularLocation>
    <subcellularLocation>
        <location evidence="1">Cytoplasm</location>
    </subcellularLocation>
    <text evidence="1">Localizes predominantly in the nucleus. Colocalizes in the nucleus with SIRT1. Translocates into the nucleus in a PIK3R-, ER stress-induced- and/or insulin-dependent manner (By similarity).</text>
</comment>
<comment type="subcellular location">
    <molecule>X-box-binding protein 1, cytoplasmic form</molecule>
    <subcellularLocation>
        <location evidence="26">Cytoplasm</location>
    </subcellularLocation>
    <subcellularLocation>
        <location evidence="26">Nucleus</location>
    </subcellularLocation>
    <text evidence="26">Localizes in the cytoplasm and nucleus after HM13/SPP-mediated intramembranaire proteolytic cleavage of isoform 1 (PubMed:25239945).</text>
</comment>
<comment type="alternative products">
    <event type="alternative splicing"/>
    <isoform>
        <id>P17861-1</id>
        <name>1</name>
        <name evidence="36">Unprocessed XBP-1</name>
        <name evidence="31">XBP-1U</name>
        <name evidence="32">XBP1u</name>
        <sequence type="displayed"/>
    </isoform>
    <isoform>
        <id>P17861-2</id>
        <name>2</name>
        <name evidence="36">Processed XBP-1</name>
        <name evidence="31">XBP-1S</name>
        <name evidence="32">XBP1s</name>
        <sequence type="described" ref="VSP_012936"/>
    </isoform>
</comment>
<comment type="tissue specificity">
    <text evidence="6 16 27">Expressed in plasma cells in rheumatoid synovium (PubMed:11460154). Over-expressed in primary breast cancer and metastatic breast cancer cells (PubMed:25280941). Isoform 1 and isoform 2 are expressed at higher level in proliferating as compared to confluent quiescent endothelial cells (PubMed:19416856).</text>
</comment>
<comment type="induction">
    <text evidence="5 6 7 9 11 16 22 24 25 29">Isoform 1 is up-regulated at the recovery phase of the endoplasmic reticulum (ER) stress response and isoform 2 is up-regulated early during the ER stress response and gradually decreased at later phase of ER stress (PubMed:16461360). Isoform 1 and isoform 2 are down-regulated by laminar flow but up-regulated by disturbed flow in umbilical vein endothelial cells in vitro (at protein level) (PubMed:19416856). Down-regulated by the B-cell-specific transcription factor PAX5 (PubMed:8627152). Up-regulated by interleukin IL-6 in myeloma cells (PubMed:10375612). Up-regulated during plasma-cell differentiation, either through the CD40 receptor signaling pathway or mitogens such as lipopolysaccharide (LPS) (PubMed:11460154). Isoform 1 and isoform 2 are down-regulated by laminar flow but up-regulated by disturbed flow in umbilical vein endothelial cells in vitro (PubMed:25190803). Isoform 2 is up-regulated early during the ER stress response in a ATF6-dependent manner (PubMed:11779464, PubMed:16461360, PubMed:17110785). Isoform 2 is up-regulated by endostatin in a ERN1-dependent manner (PubMed:23184933). Isoform 2 is transiently up-regulated by the mitogenic vascular endothelial growth factor (VEGF) in endothelial cells (PubMed:23529610).</text>
</comment>
<comment type="domain">
    <text evidence="1 7 9 15 20 30">Isoform 1 and isoform 2 N-terminus domains are necessary for nuclear localization targeting. Isoform 1 C-terminus domain confers localization to the cytoplasm and is sufficient to impose rapid degradation (By similarity). Isoform 1 transmembrane signal-anchor domain is necessary for its own mRNA to be recruited to the endoplasmic reticulum (ER) which will undergo unconventional ERN1-dependent splicing in response to ER stress (PubMed:19394296, PubMed:21233347). Isoform 1 N-terminus and C-terminus regions are necessary for DNA-binding and weak transcriptional activity, respectively. Isoform 2 N-terminus and C-terminus regions are necessary for DNA-binding and strong transcriptional activity upon ER stress, respectively (PubMed:11779464, PubMed:8657566). Isoform 2 C-terminus region contains a nuclear exclusion signal (NES) at positions 186 through 208. Isoform 2 C-terminus region contains a degradation domain at positions 209 through 261 (PubMed:16461360).</text>
</comment>
<comment type="PTM">
    <molecule>Isoform 2</molecule>
    <text evidence="19 37">Acetylated by EP300; acetylation positively regulates the transcriptional activity of XBP1 isoform 2 (PubMed:20955178). Isoform 2 is deacetylated by SIRT1; deacetylation negatively regulates the transcriptional activity of XBP1 isoform 2 (PubMed:20955178).</text>
</comment>
<comment type="PTM">
    <molecule>Isoform 1</molecule>
    <text evidence="1 7 9 26">Ubiquitinated, leading to proteasome-mediated degradation in response to ER stress (PubMed:11779464, PubMed:16461360, PubMed:25239945).</text>
</comment>
<comment type="PTM">
    <text evidence="26">X-box-binding protein 1, cytoplasmic form and luminal form are produced by intramembrane proteolytic cleavage of ER membrane-anchored isoform 1 triggered by HM13/SPP in a DERL1-RNF139-dependent and VCP/p97-independent manner. X-box-binding protein 1, luminal form is ubiquitinated leading to proteasomal degradation (PubMed:25239945).</text>
</comment>
<comment type="disease">
    <disease id="DI-02890">
        <name>Major affective disorder 7</name>
        <acronym>MAFD7</acronym>
        <description>A major psychiatric disorder that is characterized by severe mood swings, with fluctuation between two abnormal mood states (manic or major depressive episode). Mania is accompanied by symptoms of euphoria, irritability, or excitation, whereas depression is associated with low mood and decreased motivation and energy.</description>
        <dbReference type="MIM" id="612371"/>
    </disease>
    <text>Disease susceptibility may be associated with variants affecting the gene represented in this entry.</text>
</comment>
<comment type="miscellaneous">
    <molecule>Isoform 2</molecule>
    <text evidence="7 15 17">Potent transcriptional activator. Induced by unconventional ERN1-dependent splicing in response to endoplasmic reticulum stress (PubMed:11779464, PubMed:19394296, PubMed:19622636). ERN1 cleaves a 26-bp fragment causing a frameshift of the mRNA transcript (PubMed:11779464).</text>
</comment>
<comment type="similarity">
    <text evidence="36">Belongs to the bZIP family.</text>
</comment>